<dbReference type="EMBL" id="M19311">
    <property type="protein sequence ID" value="AAA35641.1"/>
    <property type="molecule type" value="mRNA"/>
</dbReference>
<dbReference type="EMBL" id="D45887">
    <property type="protein sequence ID" value="BAA08302.1"/>
    <property type="molecule type" value="mRNA"/>
</dbReference>
<dbReference type="EMBL" id="U94728">
    <property type="protein sequence ID" value="AAC83174.1"/>
    <property type="molecule type" value="Genomic_DNA"/>
</dbReference>
<dbReference type="EMBL" id="U94725">
    <property type="protein sequence ID" value="AAC83174.1"/>
    <property type="status" value="JOINED"/>
    <property type="molecule type" value="Genomic_DNA"/>
</dbReference>
<dbReference type="EMBL" id="U94726">
    <property type="protein sequence ID" value="AAC83174.1"/>
    <property type="status" value="JOINED"/>
    <property type="molecule type" value="Genomic_DNA"/>
</dbReference>
<dbReference type="EMBL" id="BT009916">
    <property type="protein sequence ID" value="AAP88918.1"/>
    <property type="molecule type" value="mRNA"/>
</dbReference>
<dbReference type="EMBL" id="CR541990">
    <property type="protein sequence ID" value="CAG46787.1"/>
    <property type="molecule type" value="mRNA"/>
</dbReference>
<dbReference type="EMBL" id="CR542021">
    <property type="protein sequence ID" value="CAG46818.1"/>
    <property type="molecule type" value="mRNA"/>
</dbReference>
<dbReference type="EMBL" id="AC073283">
    <property type="protein sequence ID" value="AAY24085.1"/>
    <property type="molecule type" value="Genomic_DNA"/>
</dbReference>
<dbReference type="EMBL" id="BC003354">
    <property type="protein sequence ID" value="AAH03354.1"/>
    <property type="molecule type" value="mRNA"/>
</dbReference>
<dbReference type="EMBL" id="BC006464">
    <property type="protein sequence ID" value="AAH06464.1"/>
    <property type="molecule type" value="mRNA"/>
</dbReference>
<dbReference type="EMBL" id="BC008437">
    <property type="protein sequence ID" value="AAH08437.1"/>
    <property type="molecule type" value="mRNA"/>
</dbReference>
<dbReference type="EMBL" id="BC017385">
    <property type="protein sequence ID" value="AAH17385.1"/>
    <property type="molecule type" value="mRNA"/>
</dbReference>
<dbReference type="EMBL" id="BC018677">
    <property type="protein sequence ID" value="AAH18677.1"/>
    <property type="molecule type" value="mRNA"/>
</dbReference>
<dbReference type="EMBL" id="BC026065">
    <property type="protein sequence ID" value="AAH26065.1"/>
    <property type="molecule type" value="mRNA"/>
</dbReference>
<dbReference type="CCDS" id="CCDS1832.1"/>
<dbReference type="RefSeq" id="NP_001292553.1">
    <property type="nucleotide sequence ID" value="NM_001305624.1"/>
</dbReference>
<dbReference type="RefSeq" id="NP_001292554.1">
    <property type="nucleotide sequence ID" value="NM_001305625.1"/>
</dbReference>
<dbReference type="RefSeq" id="NP_001292555.1">
    <property type="nucleotide sequence ID" value="NM_001305626.1"/>
</dbReference>
<dbReference type="RefSeq" id="NP_001316851.1">
    <property type="nucleotide sequence ID" value="NM_001329922.1"/>
</dbReference>
<dbReference type="RefSeq" id="NP_001734.1">
    <property type="nucleotide sequence ID" value="NM_001743.6"/>
</dbReference>
<dbReference type="RefSeq" id="NP_005175.2">
    <property type="nucleotide sequence ID" value="NM_005184.3"/>
</dbReference>
<dbReference type="RefSeq" id="NP_008819.1">
    <property type="nucleotide sequence ID" value="NM_006888.4"/>
</dbReference>
<dbReference type="PDB" id="3O77">
    <property type="method" value="X-ray"/>
    <property type="resolution" value="2.35 A"/>
    <property type="chains" value="A=45-149"/>
</dbReference>
<dbReference type="PDB" id="3O78">
    <property type="method" value="X-ray"/>
    <property type="resolution" value="2.60 A"/>
    <property type="chains" value="A/B=45-149"/>
</dbReference>
<dbReference type="PDB" id="5COC">
    <property type="method" value="X-ray"/>
    <property type="resolution" value="2.67 A"/>
    <property type="chains" value="A=10-78"/>
</dbReference>
<dbReference type="PDB" id="5J03">
    <property type="method" value="X-ray"/>
    <property type="resolution" value="2.00 A"/>
    <property type="chains" value="B=1-149"/>
</dbReference>
<dbReference type="PDB" id="5NIN">
    <property type="method" value="X-ray"/>
    <property type="resolution" value="1.70 A"/>
    <property type="chains" value="A/B=1-149"/>
</dbReference>
<dbReference type="PDB" id="5VMS">
    <property type="method" value="EM"/>
    <property type="resolution" value="3.70 A"/>
    <property type="chains" value="B=1-149"/>
</dbReference>
<dbReference type="PDB" id="5WSU">
    <property type="method" value="X-ray"/>
    <property type="resolution" value="3.00 A"/>
    <property type="chains" value="A/B=2-149"/>
</dbReference>
<dbReference type="PDB" id="5WSV">
    <property type="method" value="X-ray"/>
    <property type="resolution" value="2.33 A"/>
    <property type="chains" value="A/C=1-147"/>
</dbReference>
<dbReference type="PDB" id="6PLM">
    <property type="method" value="X-ray"/>
    <property type="resolution" value="2.59 A"/>
    <property type="chains" value="C/D=2-148"/>
</dbReference>
<dbReference type="PDB" id="6S5T">
    <property type="method" value="EM"/>
    <property type="resolution" value="4.15 A"/>
    <property type="chains" value="B=1-149"/>
</dbReference>
<dbReference type="PDB" id="6SZ5">
    <property type="method" value="X-ray"/>
    <property type="resolution" value="2.23 A"/>
    <property type="chains" value="A=1-149"/>
</dbReference>
<dbReference type="PDB" id="6XXF">
    <property type="method" value="X-ray"/>
    <property type="resolution" value="1.70 A"/>
    <property type="chains" value="AAA=1-149"/>
</dbReference>
<dbReference type="PDB" id="6Y4O">
    <property type="method" value="X-ray"/>
    <property type="resolution" value="1.84 A"/>
    <property type="chains" value="A=1-149"/>
</dbReference>
<dbReference type="PDB" id="7MIR">
    <property type="method" value="EM"/>
    <property type="resolution" value="2.50 A"/>
    <property type="chains" value="B=1-149"/>
</dbReference>
<dbReference type="PDB" id="7MIS">
    <property type="method" value="EM"/>
    <property type="resolution" value="2.80 A"/>
    <property type="chains" value="B=1-149"/>
</dbReference>
<dbReference type="PDB" id="7PPO">
    <property type="method" value="EM"/>
    <property type="resolution" value="2.91 A"/>
    <property type="chains" value="B=1-149"/>
</dbReference>
<dbReference type="PDB" id="7PQE">
    <property type="method" value="EM"/>
    <property type="resolution" value="3.70 A"/>
    <property type="chains" value="B=1-149"/>
</dbReference>
<dbReference type="PDB" id="8K9Z">
    <property type="method" value="X-ray"/>
    <property type="resolution" value="2.90 A"/>
    <property type="chains" value="B/D=1-149"/>
</dbReference>
<dbReference type="PDB" id="8KA0">
    <property type="method" value="X-ray"/>
    <property type="resolution" value="2.35 A"/>
    <property type="chains" value="B/D/F/H=1-149"/>
</dbReference>
<dbReference type="PDB" id="8KA1">
    <property type="method" value="X-ray"/>
    <property type="resolution" value="2.82 A"/>
    <property type="chains" value="B/D/F/H=1-149"/>
</dbReference>
<dbReference type="PDBsum" id="3O77"/>
<dbReference type="PDBsum" id="3O78"/>
<dbReference type="PDBsum" id="5COC"/>
<dbReference type="PDBsum" id="5J03"/>
<dbReference type="PDBsum" id="5NIN"/>
<dbReference type="PDBsum" id="5VMS"/>
<dbReference type="PDBsum" id="5WSU"/>
<dbReference type="PDBsum" id="5WSV"/>
<dbReference type="PDBsum" id="6PLM"/>
<dbReference type="PDBsum" id="6S5T"/>
<dbReference type="PDBsum" id="6SZ5"/>
<dbReference type="PDBsum" id="6XXF"/>
<dbReference type="PDBsum" id="6Y4O"/>
<dbReference type="PDBsum" id="7MIR"/>
<dbReference type="PDBsum" id="7MIS"/>
<dbReference type="PDBsum" id="7PPO"/>
<dbReference type="PDBsum" id="7PQE"/>
<dbReference type="PDBsum" id="8K9Z"/>
<dbReference type="PDBsum" id="8KA0"/>
<dbReference type="PDBsum" id="8KA1"/>
<dbReference type="EMDB" id="EMD-10100"/>
<dbReference type="EMDB" id="EMD-13583"/>
<dbReference type="EMDB" id="EMD-13591"/>
<dbReference type="EMDB" id="EMD-23862"/>
<dbReference type="EMDB" id="EMD-23863"/>
<dbReference type="EMDB" id="EMD-37593"/>
<dbReference type="SMR" id="P0DP24"/>
<dbReference type="ComplexPortal" id="CPX-1001">
    <property type="entry name" value="Calcineurin-Calmodulin complex, gamma-R1 variant"/>
</dbReference>
<dbReference type="ComplexPortal" id="CPX-1002">
    <property type="entry name" value="Calcineurin-Calmodulin complex, beta-R2 variant"/>
</dbReference>
<dbReference type="ComplexPortal" id="CPX-1003">
    <property type="entry name" value="Calcineurin-Calmodulin complex, alpha-R1 variant"/>
</dbReference>
<dbReference type="ComplexPortal" id="CPX-1009">
    <property type="entry name" value="Calcineurin-Calmodulin complex, beta-R1 variant"/>
</dbReference>
<dbReference type="ComplexPortal" id="CPX-102">
    <property type="entry name" value="DAPK1 - calmodulin complex"/>
</dbReference>
<dbReference type="ComplexPortal" id="CPX-1048">
    <property type="entry name" value="Calcineurin-Calmodulin complex, alpha-R2 variant"/>
</dbReference>
<dbReference type="ComplexPortal" id="CPX-1050">
    <property type="entry name" value="Calcineurin-Calmodulin complex, gamma-R2 variant"/>
</dbReference>
<dbReference type="ComplexPortal" id="CPX-1112">
    <property type="entry name" value="Calcineurin-Calmodulin-AKAP5 complex, gamma-R1 variant"/>
</dbReference>
<dbReference type="ComplexPortal" id="CPX-1114">
    <property type="entry name" value="Calcineurin-Calmodulin-AKAP5 complex, alpha-R2 variant"/>
</dbReference>
<dbReference type="ComplexPortal" id="CPX-1116">
    <property type="entry name" value="Calcineurin-Calmodulin-AKAP5 complex, beta-R2 variant"/>
</dbReference>
<dbReference type="ComplexPortal" id="CPX-1118">
    <property type="entry name" value="Calcineurin-Calmodulin-AKAP5 complex, gamma-R2 variant"/>
</dbReference>
<dbReference type="ComplexPortal" id="CPX-2341">
    <property type="entry name" value="NALCN channelosome complex"/>
</dbReference>
<dbReference type="ComplexPortal" id="CPX-2640">
    <property type="entry name" value="Phosphorylase kinase, muscle variant"/>
</dbReference>
<dbReference type="ComplexPortal" id="CPX-674">
    <property type="entry name" value="Calcineurin-Calmodulin-AKAP5 complex, alpha-R1 variant"/>
</dbReference>
<dbReference type="ComplexPortal" id="CPX-902">
    <property type="entry name" value="Kv7.1 channel complex"/>
</dbReference>
<dbReference type="ComplexPortal" id="CPX-9141">
    <property type="entry name" value="Silencing factor of the integrated stress response complex"/>
</dbReference>
<dbReference type="ComplexPortal" id="CPX-9581">
    <property type="entry name" value="Phosphorylase kinase, liver variant"/>
</dbReference>
<dbReference type="ComplexPortal" id="CPX-998">
    <property type="entry name" value="Calcineurin-Calmodulin-AKAP5 complex, beta-R1 variant"/>
</dbReference>
<dbReference type="CORUM" id="P0DP24"/>
<dbReference type="FunCoup" id="P0DP24">
    <property type="interactions" value="3663"/>
</dbReference>
<dbReference type="IntAct" id="P0DP24">
    <property type="interactions" value="95"/>
</dbReference>
<dbReference type="ChEMBL" id="CHEMBL4296043"/>
<dbReference type="DrugBank" id="DB08039">
    <property type="generic name" value="(3Z)-N,N-DIMETHYL-2-OXO-3-(4,5,6,7-TETRAHYDRO-1H-INDOL-2-YLMETHYLIDENE)-2,3-DIHYDRO-1H-INDOLE-5-SULFONAMIDE"/>
</dbReference>
<dbReference type="DrugBank" id="DB14511">
    <property type="generic name" value="Acetate"/>
</dbReference>
<dbReference type="DrugBank" id="DB01429">
    <property type="generic name" value="Aprindine"/>
</dbReference>
<dbReference type="DrugBank" id="DB01244">
    <property type="generic name" value="Bepridil"/>
</dbReference>
<dbReference type="DrugBank" id="DB01373">
    <property type="generic name" value="Calcium"/>
</dbReference>
<dbReference type="DrugBank" id="DB11093">
    <property type="generic name" value="Calcium citrate"/>
</dbReference>
<dbReference type="DrugBank" id="DB13800">
    <property type="generic name" value="Calcium levulinate"/>
</dbReference>
<dbReference type="DrugBank" id="DB11348">
    <property type="generic name" value="Calcium Phosphate"/>
</dbReference>
<dbReference type="DrugBank" id="DB14481">
    <property type="generic name" value="Calcium phosphate dihydrate"/>
</dbReference>
<dbReference type="DrugBank" id="DB00477">
    <property type="generic name" value="Chlorpromazine"/>
</dbReference>
<dbReference type="DrugBank" id="DB00527">
    <property type="generic name" value="Cinchocaine"/>
</dbReference>
<dbReference type="DrugBank" id="DB02868">
    <property type="generic name" value="Deacetoxyvinzolidine"/>
</dbReference>
<dbReference type="DrugBank" id="DB04209">
    <property type="generic name" value="Dequalinium"/>
</dbReference>
<dbReference type="DrugBank" id="DB01023">
    <property type="generic name" value="Felodipine"/>
</dbReference>
<dbReference type="DrugBank" id="DB04841">
    <property type="generic name" value="Flunarizine"/>
</dbReference>
<dbReference type="DrugBank" id="DB00623">
    <property type="generic name" value="Fluphenazine"/>
</dbReference>
<dbReference type="DrugBank" id="DB01218">
    <property type="generic name" value="Halofantrine"/>
</dbReference>
<dbReference type="DrugBank" id="DB00753">
    <property type="generic name" value="Isoflurane"/>
</dbReference>
<dbReference type="DrugBank" id="DB00836">
    <property type="generic name" value="Loperamide"/>
</dbReference>
<dbReference type="DrugBank" id="DB01065">
    <property type="generic name" value="Melatonin"/>
</dbReference>
<dbReference type="DrugBank" id="DB08231">
    <property type="generic name" value="Myristic acid"/>
</dbReference>
<dbReference type="DrugBank" id="DB04513">
    <property type="generic name" value="N-(6-Aminohexyl)-5-Chloro-1-Naphthalenesulfonamide"/>
</dbReference>
<dbReference type="DrugBank" id="DB00622">
    <property type="generic name" value="Nicardipine"/>
</dbReference>
<dbReference type="DrugBank" id="DB01115">
    <property type="generic name" value="Nifedipine"/>
</dbReference>
<dbReference type="DrugBank" id="DB00850">
    <property type="generic name" value="Perphenazine"/>
</dbReference>
<dbReference type="DrugBank" id="DB00925">
    <property type="generic name" value="Phenoxybenzamine"/>
</dbReference>
<dbReference type="DrugBank" id="DB01100">
    <property type="generic name" value="Pimozide"/>
</dbReference>
<dbReference type="DrugBank" id="DB04825">
    <property type="generic name" value="Prenylamine"/>
</dbReference>
<dbReference type="DrugBank" id="DB01069">
    <property type="generic name" value="Promethazine"/>
</dbReference>
<dbReference type="DrugBank" id="DB03900">
    <property type="generic name" value="tert-butanol"/>
</dbReference>
<dbReference type="DrugBank" id="DB00831">
    <property type="generic name" value="Trifluoperazine"/>
</dbReference>
<dbReference type="DrugBank" id="DB03977">
    <property type="generic name" value="Trimethyllysine"/>
</dbReference>
<dbReference type="DrugCentral" id="P0DP24"/>
<dbReference type="GlyGen" id="P0DP24">
    <property type="glycosylation" value="1 site, 1 O-linked glycan (1 site)"/>
</dbReference>
<dbReference type="iPTMnet" id="P0DP24"/>
<dbReference type="BioMuta" id="CALM2"/>
<dbReference type="jPOST" id="P0DP24"/>
<dbReference type="MassIVE" id="P0DP24"/>
<dbReference type="Pumba" id="P0DP24"/>
<dbReference type="Antibodypedia" id="53945">
    <property type="antibodies" value="71 antibodies from 14 providers"/>
</dbReference>
<dbReference type="DNASU" id="801"/>
<dbReference type="Ensembl" id="ENST00000272298.12">
    <property type="protein sequence ID" value="ENSP00000272298.7"/>
    <property type="gene ID" value="ENSG00000143933.20"/>
</dbReference>
<dbReference type="GeneID" id="801"/>
<dbReference type="GeneID" id="805"/>
<dbReference type="GeneID" id="808"/>
<dbReference type="KEGG" id="hsa:801"/>
<dbReference type="KEGG" id="hsa:805"/>
<dbReference type="KEGG" id="hsa:808"/>
<dbReference type="MANE-Select" id="ENST00000272298.12">
    <property type="protein sequence ID" value="ENSP00000272298.7"/>
    <property type="RefSeq nucleotide sequence ID" value="NM_001743.6"/>
    <property type="RefSeq protein sequence ID" value="NP_001734.1"/>
</dbReference>
<dbReference type="AGR" id="HGNC:1442"/>
<dbReference type="AGR" id="HGNC:1445"/>
<dbReference type="AGR" id="HGNC:1449"/>
<dbReference type="CTD" id="801"/>
<dbReference type="CTD" id="805"/>
<dbReference type="CTD" id="808"/>
<dbReference type="DisGeNET" id="801"/>
<dbReference type="DisGeNET" id="805"/>
<dbReference type="DisGeNET" id="808"/>
<dbReference type="GeneCards" id="CALM2"/>
<dbReference type="GeneReviews" id="CALM2"/>
<dbReference type="HGNC" id="HGNC:1445">
    <property type="gene designation" value="CALM2"/>
</dbReference>
<dbReference type="HPA" id="ENSG00000143933">
    <property type="expression patterns" value="Low tissue specificity"/>
</dbReference>
<dbReference type="MalaCards" id="CALM2"/>
<dbReference type="MIM" id="114182">
    <property type="type" value="gene"/>
</dbReference>
<dbReference type="MIM" id="616249">
    <property type="type" value="phenotype"/>
</dbReference>
<dbReference type="neXtProt" id="NX_P0DP24"/>
<dbReference type="OpenTargets" id="ENSG00000143933"/>
<dbReference type="OpenTargets" id="ENSG00000160014"/>
<dbReference type="OpenTargets" id="ENSG00000198668"/>
<dbReference type="Orphanet" id="3286">
    <property type="disease" value="Catecholaminergic polymorphic ventricular tachycardia"/>
</dbReference>
<dbReference type="Orphanet" id="101016">
    <property type="disease" value="Romano-Ward syndrome"/>
</dbReference>
<dbReference type="VEuPathDB" id="HostDB:ENSG00000143933"/>
<dbReference type="InParanoid" id="P0DP24"/>
<dbReference type="OMA" id="DEMIREP"/>
<dbReference type="OrthoDB" id="9924840at2759"/>
<dbReference type="PAN-GO" id="P0DP24">
    <property type="GO annotations" value="3 GO annotations based on evolutionary models"/>
</dbReference>
<dbReference type="PathwayCommons" id="P0DP24"/>
<dbReference type="SignaLink" id="P0DP24"/>
<dbReference type="SIGNOR" id="P0DP24"/>
<dbReference type="BioGRID-ORCS" id="801">
    <property type="hits" value="10 hits in 1158 CRISPR screens"/>
</dbReference>
<dbReference type="BioGRID-ORCS" id="805">
    <property type="hits" value="38 hits in 1009 CRISPR screens"/>
</dbReference>
<dbReference type="BioGRID-ORCS" id="808">
    <property type="hits" value="46 hits in 1159 CRISPR screens"/>
</dbReference>
<dbReference type="ChiTaRS" id="CALM2">
    <property type="organism name" value="human"/>
</dbReference>
<dbReference type="Pharos" id="P0DP24">
    <property type="development level" value="Tclin"/>
</dbReference>
<dbReference type="PRO" id="PR:P0DP24"/>
<dbReference type="Proteomes" id="UP000005640">
    <property type="component" value="Chromosome 2"/>
</dbReference>
<dbReference type="RNAct" id="P0DP24">
    <property type="molecule type" value="protein"/>
</dbReference>
<dbReference type="Bgee" id="ENSG00000143933">
    <property type="expression patterns" value="Expressed in middle temporal gyrus and 215 other cell types or tissues"/>
</dbReference>
<dbReference type="ExpressionAtlas" id="P0DP24">
    <property type="expression patterns" value="baseline and differential"/>
</dbReference>
<dbReference type="GO" id="GO:0034704">
    <property type="term" value="C:calcium channel complex"/>
    <property type="evidence" value="ECO:0000314"/>
    <property type="project" value="BHF-UCL"/>
</dbReference>
<dbReference type="GO" id="GO:0044305">
    <property type="term" value="C:calyx of Held"/>
    <property type="evidence" value="ECO:0007669"/>
    <property type="project" value="Ensembl"/>
</dbReference>
<dbReference type="GO" id="GO:1902494">
    <property type="term" value="C:catalytic complex"/>
    <property type="evidence" value="ECO:0000314"/>
    <property type="project" value="CAFA"/>
</dbReference>
<dbReference type="GO" id="GO:0005813">
    <property type="term" value="C:centrosome"/>
    <property type="evidence" value="ECO:0000314"/>
    <property type="project" value="UniProtKB"/>
</dbReference>
<dbReference type="GO" id="GO:0005737">
    <property type="term" value="C:cytoplasm"/>
    <property type="evidence" value="ECO:0000314"/>
    <property type="project" value="UniProtKB"/>
</dbReference>
<dbReference type="GO" id="GO:0016020">
    <property type="term" value="C:membrane"/>
    <property type="evidence" value="ECO:0000250"/>
    <property type="project" value="ARUK-UCL"/>
</dbReference>
<dbReference type="GO" id="GO:0043209">
    <property type="term" value="C:myelin sheath"/>
    <property type="evidence" value="ECO:0000318"/>
    <property type="project" value="GO_Central"/>
</dbReference>
<dbReference type="GO" id="GO:0005634">
    <property type="term" value="C:nucleus"/>
    <property type="evidence" value="ECO:0007005"/>
    <property type="project" value="UniProtKB"/>
</dbReference>
<dbReference type="GO" id="GO:0005886">
    <property type="term" value="C:plasma membrane"/>
    <property type="evidence" value="ECO:0000304"/>
    <property type="project" value="UniProtKB"/>
</dbReference>
<dbReference type="GO" id="GO:0099523">
    <property type="term" value="C:presynaptic cytosol"/>
    <property type="evidence" value="ECO:0007669"/>
    <property type="project" value="Ensembl"/>
</dbReference>
<dbReference type="GO" id="GO:0032991">
    <property type="term" value="C:protein-containing complex"/>
    <property type="evidence" value="ECO:0000314"/>
    <property type="project" value="CAFA"/>
</dbReference>
<dbReference type="GO" id="GO:0030017">
    <property type="term" value="C:sarcomere"/>
    <property type="evidence" value="ECO:0000314"/>
    <property type="project" value="BHF-UCL"/>
</dbReference>
<dbReference type="GO" id="GO:0097225">
    <property type="term" value="C:sperm midpiece"/>
    <property type="evidence" value="ECO:0007669"/>
    <property type="project" value="Ensembl"/>
</dbReference>
<dbReference type="GO" id="GO:0005876">
    <property type="term" value="C:spindle microtubule"/>
    <property type="evidence" value="ECO:0000314"/>
    <property type="project" value="UniProtKB"/>
</dbReference>
<dbReference type="GO" id="GO:0000922">
    <property type="term" value="C:spindle pole"/>
    <property type="evidence" value="ECO:0000314"/>
    <property type="project" value="UniProtKB"/>
</dbReference>
<dbReference type="GO" id="GO:0031982">
    <property type="term" value="C:vesicle"/>
    <property type="evidence" value="ECO:0007005"/>
    <property type="project" value="UniProtKB"/>
</dbReference>
<dbReference type="GO" id="GO:0008076">
    <property type="term" value="C:voltage-gated potassium channel complex"/>
    <property type="evidence" value="ECO:0007669"/>
    <property type="project" value="Ensembl"/>
</dbReference>
<dbReference type="GO" id="GO:0010856">
    <property type="term" value="F:adenylate cyclase activator activity"/>
    <property type="evidence" value="ECO:0000314"/>
    <property type="project" value="UniProtKB"/>
</dbReference>
<dbReference type="GO" id="GO:0008179">
    <property type="term" value="F:adenylate cyclase binding"/>
    <property type="evidence" value="ECO:0000353"/>
    <property type="project" value="CAFA"/>
</dbReference>
<dbReference type="GO" id="GO:0019855">
    <property type="term" value="F:calcium channel inhibitor activity"/>
    <property type="evidence" value="ECO:0000314"/>
    <property type="project" value="UniProtKB"/>
</dbReference>
<dbReference type="GO" id="GO:0005246">
    <property type="term" value="F:calcium channel regulator activity"/>
    <property type="evidence" value="ECO:0000314"/>
    <property type="project" value="BHF-UCL"/>
</dbReference>
<dbReference type="GO" id="GO:0005509">
    <property type="term" value="F:calcium ion binding"/>
    <property type="evidence" value="ECO:0000314"/>
    <property type="project" value="UniProtKB"/>
</dbReference>
<dbReference type="GO" id="GO:0048306">
    <property type="term" value="F:calcium-dependent protein binding"/>
    <property type="evidence" value="ECO:0000250"/>
    <property type="project" value="ARUK-UCL"/>
</dbReference>
<dbReference type="GO" id="GO:0019901">
    <property type="term" value="F:protein kinase binding"/>
    <property type="evidence" value="ECO:0000353"/>
    <property type="project" value="BHF-UCL"/>
</dbReference>
<dbReference type="GO" id="GO:0072542">
    <property type="term" value="F:protein phosphatase activator activity"/>
    <property type="evidence" value="ECO:0000314"/>
    <property type="project" value="BHF-UCL"/>
</dbReference>
<dbReference type="GO" id="GO:0043539">
    <property type="term" value="F:protein serine/threonine kinase activator activity"/>
    <property type="evidence" value="ECO:0000314"/>
    <property type="project" value="UniProtKB"/>
</dbReference>
<dbReference type="GO" id="GO:0031432">
    <property type="term" value="F:titin binding"/>
    <property type="evidence" value="ECO:0000353"/>
    <property type="project" value="BHF-UCL"/>
</dbReference>
<dbReference type="GO" id="GO:0044325">
    <property type="term" value="F:transmembrane transporter binding"/>
    <property type="evidence" value="ECO:0000353"/>
    <property type="project" value="BHF-UCL"/>
</dbReference>
<dbReference type="GO" id="GO:0141110">
    <property type="term" value="F:transporter inhibitor activity"/>
    <property type="evidence" value="ECO:0000250"/>
    <property type="project" value="ARUK-UCL"/>
</dbReference>
<dbReference type="GO" id="GO:0097720">
    <property type="term" value="P:calcineurin-mediated signaling"/>
    <property type="evidence" value="ECO:0000314"/>
    <property type="project" value="BHF-UCL"/>
</dbReference>
<dbReference type="GO" id="GO:0005513">
    <property type="term" value="P:detection of calcium ion"/>
    <property type="evidence" value="ECO:0000315"/>
    <property type="project" value="BHF-UCL"/>
</dbReference>
<dbReference type="GO" id="GO:0007186">
    <property type="term" value="P:G protein-coupled receptor signaling pathway"/>
    <property type="evidence" value="ECO:0000304"/>
    <property type="project" value="UniProtKB"/>
</dbReference>
<dbReference type="GO" id="GO:0000086">
    <property type="term" value="P:G2/M transition of mitotic cell cycle"/>
    <property type="evidence" value="ECO:0007669"/>
    <property type="project" value="Ensembl"/>
</dbReference>
<dbReference type="GO" id="GO:0060291">
    <property type="term" value="P:long-term synaptic potentiation"/>
    <property type="evidence" value="ECO:0000304"/>
    <property type="project" value="BHF-UCL"/>
</dbReference>
<dbReference type="GO" id="GO:1905913">
    <property type="term" value="P:negative regulation of calcium ion export across plasma membrane"/>
    <property type="evidence" value="ECO:0000250"/>
    <property type="project" value="ARUK-UCL"/>
</dbReference>
<dbReference type="GO" id="GO:0060315">
    <property type="term" value="P:negative regulation of ryanodine-sensitive calcium-release channel activity"/>
    <property type="evidence" value="ECO:0000314"/>
    <property type="project" value="UniProtKB"/>
</dbReference>
<dbReference type="GO" id="GO:0140238">
    <property type="term" value="P:presynaptic endocytosis"/>
    <property type="evidence" value="ECO:0007669"/>
    <property type="project" value="Ensembl"/>
</dbReference>
<dbReference type="GO" id="GO:0050848">
    <property type="term" value="P:regulation of calcium-mediated signaling"/>
    <property type="evidence" value="ECO:0000250"/>
    <property type="project" value="ARUK-UCL"/>
</dbReference>
<dbReference type="GO" id="GO:0055117">
    <property type="term" value="P:regulation of cardiac muscle contraction"/>
    <property type="evidence" value="ECO:0000315"/>
    <property type="project" value="BHF-UCL"/>
</dbReference>
<dbReference type="GO" id="GO:0010881">
    <property type="term" value="P:regulation of cardiac muscle contraction by regulation of the release of sequestered calcium ion"/>
    <property type="evidence" value="ECO:0000314"/>
    <property type="project" value="BHF-UCL"/>
</dbReference>
<dbReference type="GO" id="GO:1901844">
    <property type="term" value="P:regulation of cell communication by electrical coupling involved in cardiac conduction"/>
    <property type="evidence" value="ECO:0000305"/>
    <property type="project" value="BHF-UCL"/>
</dbReference>
<dbReference type="GO" id="GO:0032465">
    <property type="term" value="P:regulation of cytokinesis"/>
    <property type="evidence" value="ECO:0000315"/>
    <property type="project" value="UniProtKB"/>
</dbReference>
<dbReference type="GO" id="GO:0002027">
    <property type="term" value="P:regulation of heart rate"/>
    <property type="evidence" value="ECO:0000315"/>
    <property type="project" value="BHF-UCL"/>
</dbReference>
<dbReference type="GO" id="GO:0010880">
    <property type="term" value="P:regulation of release of sequestered calcium ion into cytosol by sarcoplasmic reticulum"/>
    <property type="evidence" value="ECO:0000314"/>
    <property type="project" value="BHF-UCL"/>
</dbReference>
<dbReference type="GO" id="GO:0051592">
    <property type="term" value="P:response to calcium ion"/>
    <property type="evidence" value="ECO:0000314"/>
    <property type="project" value="BHF-UCL"/>
</dbReference>
<dbReference type="GO" id="GO:0021762">
    <property type="term" value="P:substantia nigra development"/>
    <property type="evidence" value="ECO:0007007"/>
    <property type="project" value="UniProtKB"/>
</dbReference>
<dbReference type="CDD" id="cd00051">
    <property type="entry name" value="EFh"/>
    <property type="match status" value="2"/>
</dbReference>
<dbReference type="FunFam" id="1.10.238.10:FF:000527">
    <property type="entry name" value="Calmodulin-3"/>
    <property type="match status" value="1"/>
</dbReference>
<dbReference type="Gene3D" id="1.10.238.10">
    <property type="entry name" value="EF-hand"/>
    <property type="match status" value="3"/>
</dbReference>
<dbReference type="InterPro" id="IPR050230">
    <property type="entry name" value="CALM/Myosin/TropC-like"/>
</dbReference>
<dbReference type="InterPro" id="IPR011992">
    <property type="entry name" value="EF-hand-dom_pair"/>
</dbReference>
<dbReference type="InterPro" id="IPR018247">
    <property type="entry name" value="EF_Hand_1_Ca_BS"/>
</dbReference>
<dbReference type="InterPro" id="IPR002048">
    <property type="entry name" value="EF_hand_dom"/>
</dbReference>
<dbReference type="PANTHER" id="PTHR23048:SF0">
    <property type="entry name" value="CALMODULIN LIKE 3"/>
    <property type="match status" value="1"/>
</dbReference>
<dbReference type="PANTHER" id="PTHR23048">
    <property type="entry name" value="MYOSIN LIGHT CHAIN 1, 3"/>
    <property type="match status" value="1"/>
</dbReference>
<dbReference type="Pfam" id="PF13499">
    <property type="entry name" value="EF-hand_7"/>
    <property type="match status" value="2"/>
</dbReference>
<dbReference type="PRINTS" id="PR00450">
    <property type="entry name" value="RECOVERIN"/>
</dbReference>
<dbReference type="SMART" id="SM00054">
    <property type="entry name" value="EFh"/>
    <property type="match status" value="4"/>
</dbReference>
<dbReference type="SUPFAM" id="SSF47473">
    <property type="entry name" value="EF-hand"/>
    <property type="match status" value="1"/>
</dbReference>
<dbReference type="PROSITE" id="PS00018">
    <property type="entry name" value="EF_HAND_1"/>
    <property type="match status" value="4"/>
</dbReference>
<dbReference type="PROSITE" id="PS50222">
    <property type="entry name" value="EF_HAND_2"/>
    <property type="match status" value="4"/>
</dbReference>
<name>CALM2_HUMAN</name>
<gene>
    <name evidence="37 39" type="primary">CALM2</name>
    <name type="synonym">CAM2</name>
    <name type="synonym">CAMB</name>
</gene>
<sequence>MADQLTEEQIAEFKEAFSLFDKDGDGTITTKELGTVMRSLGQNPTEAELQDMINEVDADGNGTIDFPEFLTMMARKMKDTDSEEEIREAFRVFDKDGNGYISAAELRHVMTNLGEKLTDEEVDEMIREADIDGDGQVNYEEFVQMMTAK</sequence>
<comment type="function">
    <text evidence="13 23 24 30">Calmodulin acts as part of a calcium signal transduction pathway by mediating the control of a large number of enzymes, ion channels, aquaporins and other proteins through calcium-binding (PubMed:16760425, PubMed:26969752, PubMed:27165696). Calcium-binding is required for the activation of calmodulin (PubMed:16760425, PubMed:26969752, PubMed:27165696, PubMed:35568036). Among the enzymes to be stimulated by the calmodulin-calcium complex are a number of protein kinases, such as myosin light-chain kinases and calmodulin-dependent protein kinase type II (CaMK2), and phosphatases (PubMed:16760425, PubMed:26969752, PubMed:27165696, PubMed:35568036). Together with CCP110 and centrin, is involved in a genetic pathway that regulates the centrosome cycle and progression through cytokinesis (PubMed:16760425). Mediates calcium-dependent inactivation of CACNA1C (PubMed:26969752). Positively regulates calcium-activated potassium channel activity of KCNN2 (PubMed:27165696).</text>
</comment>
<comment type="function">
    <text evidence="28 29 31 32">(Microbial infection) Required for C.violaceum CopC and S.flexneri OspC3 arginine ADP-riboxanase activity.</text>
</comment>
<comment type="activity regulation">
    <text evidence="30">(Microbial infection) Inactivated by S.flexneri OspC1 and OspC3 proteins, which specifically bind the apo-form of calmodulin, thereby preventing calcium-binding and activity.</text>
</comment>
<comment type="subunit">
    <text evidence="2 4 5 6 8 11 12 13 14 15 16 17 18 21 22 25 26 27 33 35">Interacts with MYO1C, MYO5A and RRAD. Interacts with MYO10 (By similarity). Interacts with CEP97, CCP110, TTN/titin and SRY (PubMed:12871148, PubMed:15746192, PubMed:16760425, PubMed:17719545, PubMed:9804419). Interacts with USP6; the interaction is calcium dependent (PubMed:16127172). Interacts with CDK5RAP2 (PubMed:20466722). Interacts with SCN5A (By similarity). Interacts with RYR1 (PubMed:18650434). Interacts with FCHO1 (PubMed:22484487). Interacts with MIP in a 1:2 stoichiometry; the interaction with the cytoplasmic domains from two MIP subunits promotes MIP water channel closure (By similarity). Interacts with ORAI1; this may play a role in the regulation of ORAI1-mediated calcium transport (By similarity). Interacts with IQCF1 (By similarity). Interacts with SYT7 (By similarity). Interacts with CEACAM1 (via cytoplasmic domain); this interaction is in a calcium dependent manner and reduces homophilic cell adhesion through dissociation of dimer (By similarity). Interacts with RYR2; regulates RYR2 calcium-release channel activity (PubMed:18650434, PubMed:26164367, PubMed:27516456). Interacts with PCP4; regulates calmodulin calcium-binding (PubMed:27876793). Interacts with the heterotetrameric KCNQ2 and KCNQ3 channel; the interaction is calcium-independent, constitutive and participates in the proper assembly of a functional heterotetrameric M channel (PubMed:27564677). Component of the SIFI complex (PubMed:25582440, PubMed:38297121).</text>
</comment>
<comment type="subunit">
    <text evidence="28 29 31">(Microbial infection) Interacts with C.violaceum CopC (PubMed:35338844, PubMed:35446120, PubMed:36423631). C.violaceum CopC interacts specifically with the apo form of calmodulin (PubMed:35446120, PubMed:36423631).</text>
</comment>
<comment type="subunit">
    <text evidence="30 32">(Microbial infection) Interacts with S.flexneri OspC1 and OspC3 (PubMed:35568036, PubMed:36624349). S.flexneri OspC1 and OspC3 interact specifically with the apo form of calmodulin and prevents calcium-binding (PubMed:35568036).</text>
</comment>
<comment type="subcellular location">
    <subcellularLocation>
        <location evidence="13">Cytoplasm</location>
        <location evidence="13">Cytoskeleton</location>
        <location evidence="13">Spindle</location>
    </subcellularLocation>
    <subcellularLocation>
        <location evidence="13">Cytoplasm</location>
        <location evidence="13">Cytoskeleton</location>
        <location evidence="13">Spindle pole</location>
    </subcellularLocation>
    <subcellularLocation>
        <location evidence="9">Cytoplasm</location>
        <location evidence="9">Cytoskeleton</location>
        <location evidence="9">Microtubule organizing center</location>
        <location evidence="9">Centrosome</location>
    </subcellularLocation>
    <text>Distributed throughout the cell during interphase, but during mitosis becomes dramatically localized to the spindle poles and the spindle microtubules.</text>
</comment>
<comment type="PTM">
    <text evidence="1">Ubiquitination results in a strongly decreased activity.</text>
</comment>
<comment type="PTM">
    <text evidence="1">Phosphorylation results in a decreased activity.</text>
</comment>
<comment type="disease" evidence="19 20 22 23 24 25">
    <disease id="DI-04328">
        <name>Long QT syndrome 15</name>
        <acronym>LQT15</acronym>
        <description>A form of long QT syndrome, a heart disorder characterized by a prolonged QT interval on the ECG and polymorphic ventricular arrhythmias. They cause syncope and sudden death in response to exercise or emotional stress, and can present with a sentinel event of sudden cardiac death in infancy.</description>
        <dbReference type="MIM" id="616249"/>
    </disease>
    <text>The disease is caused by variants affecting the gene represented in this entry. Mutations in CALM2 are the cause of LQT15.</text>
</comment>
<comment type="miscellaneous">
    <text evidence="10">This protein has four functional calcium-binding sites.</text>
</comment>
<comment type="similarity">
    <text evidence="38">Belongs to the calmodulin family.</text>
</comment>
<reference key="1">
    <citation type="journal article" date="1987" name="J. Biol. Chem.">
        <title>Molecular analysis of human and rat calmodulin complementary DNA clones. Evidence for additional active genes in these species.</title>
        <authorList>
            <person name="Sengupta B."/>
            <person name="Friedberg F."/>
            <person name="Detera-Wadleigh S.D."/>
        </authorList>
    </citation>
    <scope>NUCLEOTIDE SEQUENCE [MRNA]</scope>
</reference>
<reference key="2">
    <citation type="submission" date="1995-02" db="EMBL/GenBank/DDBJ databases">
        <title>Human calmodulin cDNA.</title>
        <authorList>
            <person name="Kato S."/>
        </authorList>
    </citation>
    <scope>NUCLEOTIDE SEQUENCE [MRNA]</scope>
    <source>
        <tissue>Lymphoma</tissue>
    </source>
</reference>
<reference key="3">
    <citation type="journal article" date="1998" name="Cell Calcium">
        <title>Characterization of the human CALM2 calmodulin gene and comparison of the transcriptional activity of CALM1, CALM2 and CALM3.</title>
        <authorList>
            <person name="Toutenhoofd S.L."/>
            <person name="Foletti D."/>
            <person name="Wicki R."/>
            <person name="Rhyner J.A."/>
            <person name="Garcia F."/>
            <person name="Tolon R."/>
            <person name="Strehler E.E."/>
        </authorList>
    </citation>
    <scope>NUCLEOTIDE SEQUENCE [GENOMIC DNA]</scope>
</reference>
<reference key="4">
    <citation type="submission" date="2003-05" db="EMBL/GenBank/DDBJ databases">
        <title>Cloning of human full-length CDSs in BD Creator(TM) system donor vector.</title>
        <authorList>
            <person name="Kalnine N."/>
            <person name="Chen X."/>
            <person name="Rolfs A."/>
            <person name="Halleck A."/>
            <person name="Hines L."/>
            <person name="Eisenstein S."/>
            <person name="Koundinya M."/>
            <person name="Raphael J."/>
            <person name="Moreira D."/>
            <person name="Kelley T."/>
            <person name="LaBaer J."/>
            <person name="Lin Y."/>
            <person name="Phelan M."/>
            <person name="Farmer A."/>
        </authorList>
    </citation>
    <scope>NUCLEOTIDE SEQUENCE [LARGE SCALE MRNA]</scope>
</reference>
<reference key="5">
    <citation type="submission" date="2004-06" db="EMBL/GenBank/DDBJ databases">
        <title>Cloning of human full open reading frames in Gateway(TM) system entry vector (pDONR201).</title>
        <authorList>
            <person name="Halleck A."/>
            <person name="Ebert L."/>
            <person name="Mkoundinya M."/>
            <person name="Schick M."/>
            <person name="Eisenstein S."/>
            <person name="Neubert P."/>
            <person name="Kstrang K."/>
            <person name="Schatten R."/>
            <person name="Shen B."/>
            <person name="Henze S."/>
            <person name="Mar W."/>
            <person name="Korn B."/>
            <person name="Zuo D."/>
            <person name="Hu Y."/>
            <person name="LaBaer J."/>
        </authorList>
    </citation>
    <scope>NUCLEOTIDE SEQUENCE [LARGE SCALE MRNA]</scope>
</reference>
<reference key="6">
    <citation type="journal article" date="2005" name="Nature">
        <title>Generation and annotation of the DNA sequences of human chromosomes 2 and 4.</title>
        <authorList>
            <person name="Hillier L.W."/>
            <person name="Graves T.A."/>
            <person name="Fulton R.S."/>
            <person name="Fulton L.A."/>
            <person name="Pepin K.H."/>
            <person name="Minx P."/>
            <person name="Wagner-McPherson C."/>
            <person name="Layman D."/>
            <person name="Wylie K."/>
            <person name="Sekhon M."/>
            <person name="Becker M.C."/>
            <person name="Fewell G.A."/>
            <person name="Delehaunty K.D."/>
            <person name="Miner T.L."/>
            <person name="Nash W.E."/>
            <person name="Kremitzki C."/>
            <person name="Oddy L."/>
            <person name="Du H."/>
            <person name="Sun H."/>
            <person name="Bradshaw-Cordum H."/>
            <person name="Ali J."/>
            <person name="Carter J."/>
            <person name="Cordes M."/>
            <person name="Harris A."/>
            <person name="Isak A."/>
            <person name="van Brunt A."/>
            <person name="Nguyen C."/>
            <person name="Du F."/>
            <person name="Courtney L."/>
            <person name="Kalicki J."/>
            <person name="Ozersky P."/>
            <person name="Abbott S."/>
            <person name="Armstrong J."/>
            <person name="Belter E.A."/>
            <person name="Caruso L."/>
            <person name="Cedroni M."/>
            <person name="Cotton M."/>
            <person name="Davidson T."/>
            <person name="Desai A."/>
            <person name="Elliott G."/>
            <person name="Erb T."/>
            <person name="Fronick C."/>
            <person name="Gaige T."/>
            <person name="Haakenson W."/>
            <person name="Haglund K."/>
            <person name="Holmes A."/>
            <person name="Harkins R."/>
            <person name="Kim K."/>
            <person name="Kruchowski S.S."/>
            <person name="Strong C.M."/>
            <person name="Grewal N."/>
            <person name="Goyea E."/>
            <person name="Hou S."/>
            <person name="Levy A."/>
            <person name="Martinka S."/>
            <person name="Mead K."/>
            <person name="McLellan M.D."/>
            <person name="Meyer R."/>
            <person name="Randall-Maher J."/>
            <person name="Tomlinson C."/>
            <person name="Dauphin-Kohlberg S."/>
            <person name="Kozlowicz-Reilly A."/>
            <person name="Shah N."/>
            <person name="Swearengen-Shahid S."/>
            <person name="Snider J."/>
            <person name="Strong J.T."/>
            <person name="Thompson J."/>
            <person name="Yoakum M."/>
            <person name="Leonard S."/>
            <person name="Pearman C."/>
            <person name="Trani L."/>
            <person name="Radionenko M."/>
            <person name="Waligorski J.E."/>
            <person name="Wang C."/>
            <person name="Rock S.M."/>
            <person name="Tin-Wollam A.-M."/>
            <person name="Maupin R."/>
            <person name="Latreille P."/>
            <person name="Wendl M.C."/>
            <person name="Yang S.-P."/>
            <person name="Pohl C."/>
            <person name="Wallis J.W."/>
            <person name="Spieth J."/>
            <person name="Bieri T.A."/>
            <person name="Berkowicz N."/>
            <person name="Nelson J.O."/>
            <person name="Osborne J."/>
            <person name="Ding L."/>
            <person name="Meyer R."/>
            <person name="Sabo A."/>
            <person name="Shotland Y."/>
            <person name="Sinha P."/>
            <person name="Wohldmann P.E."/>
            <person name="Cook L.L."/>
            <person name="Hickenbotham M.T."/>
            <person name="Eldred J."/>
            <person name="Williams D."/>
            <person name="Jones T.A."/>
            <person name="She X."/>
            <person name="Ciccarelli F.D."/>
            <person name="Izaurralde E."/>
            <person name="Taylor J."/>
            <person name="Schmutz J."/>
            <person name="Myers R.M."/>
            <person name="Cox D.R."/>
            <person name="Huang X."/>
            <person name="McPherson J.D."/>
            <person name="Mardis E.R."/>
            <person name="Clifton S.W."/>
            <person name="Warren W.C."/>
            <person name="Chinwalla A.T."/>
            <person name="Eddy S.R."/>
            <person name="Marra M.A."/>
            <person name="Ovcharenko I."/>
            <person name="Furey T.S."/>
            <person name="Miller W."/>
            <person name="Eichler E.E."/>
            <person name="Bork P."/>
            <person name="Suyama M."/>
            <person name="Torrents D."/>
            <person name="Waterston R.H."/>
            <person name="Wilson R.K."/>
        </authorList>
    </citation>
    <scope>NUCLEOTIDE SEQUENCE [LARGE SCALE GENOMIC DNA]</scope>
</reference>
<reference key="7">
    <citation type="journal article" date="2004" name="Genome Res.">
        <title>The status, quality, and expansion of the NIH full-length cDNA project: the Mammalian Gene Collection (MGC).</title>
        <authorList>
            <consortium name="The MGC Project Team"/>
        </authorList>
    </citation>
    <scope>NUCLEOTIDE SEQUENCE [LARGE SCALE MRNA]</scope>
    <source>
        <tissue>Brain</tissue>
        <tissue>Lung</tissue>
        <tissue>Lymph</tissue>
        <tissue>Placenta</tissue>
        <tissue>Urinary bladder</tissue>
    </source>
</reference>
<reference key="8">
    <citation type="journal article" date="1982" name="Biochemistry">
        <title>Complete amino acid sequence of human brain calmodulin.</title>
        <authorList>
            <person name="Sasagawa T."/>
            <person name="Ericsson L.H."/>
            <person name="Walsh K.A."/>
            <person name="Schreiber W.E."/>
            <person name="Fischer E.H."/>
            <person name="Titani K."/>
        </authorList>
    </citation>
    <scope>PROTEIN SEQUENCE OF 2-149</scope>
    <scope>ACETYLATION AT ALA-2</scope>
    <scope>METHYLATION AT LYS-116</scope>
    <source>
        <tissue>Brain</tissue>
    </source>
</reference>
<reference key="9">
    <citation type="submission" date="2008-02" db="UniProtKB">
        <authorList>
            <person name="Bienvenut W.V."/>
            <person name="Bensaad K."/>
            <person name="Vousden K.H."/>
        </authorList>
    </citation>
    <scope>PROTEIN SEQUENCE OF 2-31 AND 92-107</scope>
    <scope>CLEAVAGE OF INITIATOR METHIONINE</scope>
    <scope>ACETYLATION AT ALA-2</scope>
    <scope>IDENTIFICATION BY MASS SPECTROMETRY</scope>
    <source>
        <tissue>Osteosarcoma</tissue>
    </source>
</reference>
<reference key="10">
    <citation type="submission" date="2008-12" db="UniProtKB">
        <authorList>
            <person name="Lubec G."/>
            <person name="Afjehi-Sadat L."/>
            <person name="Chen W.-Q."/>
            <person name="Sun Y."/>
        </authorList>
    </citation>
    <scope>PROTEIN SEQUENCE OF 15-31; 77-107 AND 128-149</scope>
    <scope>IDENTIFICATION BY MASS SPECTROMETRY</scope>
    <source>
        <tissue>Brain</tissue>
        <tissue>Cajal-Retzius cell</tissue>
        <tissue>Fetal brain cortex</tissue>
    </source>
</reference>
<reference key="11">
    <citation type="journal article" date="1992" name="J. Mol. Biol.">
        <title>Calmodulin structure refined at 1.7 A resolution.</title>
        <authorList>
            <person name="Chattopadhyaya R."/>
            <person name="Meador W.E."/>
            <person name="Means A.R."/>
            <person name="Quiocho F.A."/>
        </authorList>
    </citation>
    <scope>CALCIUM-BINDING SITES</scope>
</reference>
<reference key="12">
    <citation type="journal article" date="1998" name="Nature">
        <title>Structural basis for activation of the titin kinase domain during myofibrillogenesis.</title>
        <authorList>
            <person name="Mayans O."/>
            <person name="van der Ven P.F.M."/>
            <person name="Wilm M."/>
            <person name="Mues A."/>
            <person name="Young P."/>
            <person name="Furst D.O."/>
            <person name="Wilmanns M."/>
            <person name="Gautel M."/>
        </authorList>
    </citation>
    <scope>INTERACTION WITH TTN</scope>
</reference>
<reference key="13">
    <citation type="journal article" date="2003" name="Nature">
        <title>Proteomic characterization of the human centrosome by protein correlation profiling.</title>
        <authorList>
            <person name="Andersen J.S."/>
            <person name="Wilkinson C.J."/>
            <person name="Mayor T."/>
            <person name="Mortensen P."/>
            <person name="Nigg E.A."/>
            <person name="Mann M."/>
        </authorList>
    </citation>
    <scope>IDENTIFICATION BY MASS SPECTROMETRY</scope>
    <scope>SUBCELLULAR LOCATION [LARGE SCALE ANALYSIS]</scope>
    <source>
        <tissue>Lymphoblast</tissue>
    </source>
</reference>
<reference key="14">
    <citation type="journal article" date="2003" name="Protein Pept. Lett.">
        <title>Recombinant expression, purification and characterisation of the HMG domain of human SRY.</title>
        <authorList>
            <person name="Kelly S."/>
            <person name="Yotis J."/>
            <person name="Macris M."/>
            <person name="Harley V."/>
        </authorList>
    </citation>
    <scope>INTERACTION WITH SRY</scope>
</reference>
<reference key="15">
    <citation type="journal article" date="2005" name="J. Biol. Chem.">
        <title>Calcium/calmodulin regulates ubiquitination of the ubiquitin-specific protease TRE17/USP6.</title>
        <authorList>
            <person name="Shen C."/>
            <person name="Ye Y."/>
            <person name="Robertson S.E."/>
            <person name="Lau A.W."/>
            <person name="Mak D.O."/>
            <person name="Chou M.M."/>
        </authorList>
    </citation>
    <scope>INTERACTION WITH USP6</scope>
</reference>
<reference key="16">
    <citation type="journal article" date="2005" name="Mol. Endocrinol.">
        <title>Defective calmodulin-mediated nuclear transport of the sex-determining region of the Y chromosome (SRY) in XY sex reversal.</title>
        <authorList>
            <person name="Sim H."/>
            <person name="Rimmer K."/>
            <person name="Kelly S."/>
            <person name="Ludbrook L.M."/>
            <person name="Clayton A.H."/>
            <person name="Harley V.R."/>
        </authorList>
    </citation>
    <scope>INTERACTION WITH SRY</scope>
</reference>
<reference key="17">
    <citation type="journal article" date="2005" name="Nat. Biotechnol.">
        <title>Immunoaffinity profiling of tyrosine phosphorylation in cancer cells.</title>
        <authorList>
            <person name="Rush J."/>
            <person name="Moritz A."/>
            <person name="Lee K.A."/>
            <person name="Guo A."/>
            <person name="Goss V.L."/>
            <person name="Spek E.J."/>
            <person name="Zhang H."/>
            <person name="Zha X.-M."/>
            <person name="Polakiewicz R.D."/>
            <person name="Comb M.J."/>
        </authorList>
    </citation>
    <scope>IDENTIFICATION BY MASS SPECTROMETRY [LARGE SCALE ANALYSIS]</scope>
</reference>
<reference key="18">
    <citation type="journal article" date="2006" name="Mol. Biol. Cell">
        <title>CP110 cooperates with two calcium-binding proteins to regulate cytokinesis and genome stability.</title>
        <authorList>
            <person name="Tsang W.Y."/>
            <person name="Spektor A."/>
            <person name="Luciano D.J."/>
            <person name="Indjeian V.B."/>
            <person name="Chen Z."/>
            <person name="Salisbury J.L."/>
            <person name="Sanchez I."/>
            <person name="Dynlacht B.D."/>
        </authorList>
    </citation>
    <scope>FUNCTION</scope>
    <scope>INTERACTION WITH CCP110</scope>
    <scope>SUBCELLULAR LOCATION</scope>
</reference>
<reference key="19">
    <citation type="journal article" date="2007" name="Cell">
        <title>Cep97 and CP110 suppress a cilia assembly program.</title>
        <authorList>
            <person name="Spektor A."/>
            <person name="Tsang W.Y."/>
            <person name="Khoo D."/>
            <person name="Dynlacht B.D."/>
        </authorList>
    </citation>
    <scope>INTERACTION WITH CEP97 AND CCP110</scope>
</reference>
<reference key="20">
    <citation type="journal article" date="2008" name="J. Biol. Chem.">
        <title>S100A1 and calmodulin compete for the same binding site on ryanodine receptor.</title>
        <authorList>
            <person name="Wright N.T."/>
            <person name="Prosser B.L."/>
            <person name="Varney K.M."/>
            <person name="Zimmer D.B."/>
            <person name="Schneider M.F."/>
            <person name="Weber D.J."/>
        </authorList>
    </citation>
    <scope>INTERACTION WITH RYR1 AND RYR2</scope>
</reference>
<reference key="21">
    <citation type="journal article" date="2008" name="Proc. Natl. Acad. Sci. U.S.A.">
        <title>A quantitative atlas of mitotic phosphorylation.</title>
        <authorList>
            <person name="Dephoure N."/>
            <person name="Zhou C."/>
            <person name="Villen J."/>
            <person name="Beausoleil S.A."/>
            <person name="Bakalarski C.E."/>
            <person name="Elledge S.J."/>
            <person name="Gygi S.P."/>
        </authorList>
    </citation>
    <scope>PHOSPHORYLATION [LARGE SCALE ANALYSIS] AT TYR-100</scope>
    <scope>IDENTIFICATION BY MASS SPECTROMETRY [LARGE SCALE ANALYSIS]</scope>
    <source>
        <tissue>Cervix carcinoma</tissue>
    </source>
</reference>
<reference key="22">
    <citation type="journal article" date="2009" name="Anal. Chem.">
        <title>Lys-N and trypsin cover complementary parts of the phosphoproteome in a refined SCX-based approach.</title>
        <authorList>
            <person name="Gauci S."/>
            <person name="Helbig A.O."/>
            <person name="Slijper M."/>
            <person name="Krijgsveld J."/>
            <person name="Heck A.J."/>
            <person name="Mohammed S."/>
        </authorList>
    </citation>
    <scope>ACETYLATION [LARGE SCALE ANALYSIS] AT ALA-2</scope>
    <scope>CLEAVAGE OF INITIATOR METHIONINE [LARGE SCALE ANALYSIS]</scope>
    <scope>IDENTIFICATION BY MASS SPECTROMETRY [LARGE SCALE ANALYSIS]</scope>
</reference>
<reference key="23">
    <citation type="journal article" date="2009" name="Sci. Signal.">
        <title>Quantitative phosphoproteomic analysis of T cell receptor signaling reveals system-wide modulation of protein-protein interactions.</title>
        <authorList>
            <person name="Mayya V."/>
            <person name="Lundgren D.H."/>
            <person name="Hwang S.-I."/>
            <person name="Rezaul K."/>
            <person name="Wu L."/>
            <person name="Eng J.K."/>
            <person name="Rodionov V."/>
            <person name="Han D.K."/>
        </authorList>
    </citation>
    <scope>PHOSPHORYLATION [LARGE SCALE ANALYSIS] AT TYR-100 AND TYR-139</scope>
    <scope>IDENTIFICATION BY MASS SPECTROMETRY [LARGE SCALE ANALYSIS]</scope>
    <source>
        <tissue>Leukemic T-cell</tissue>
    </source>
</reference>
<reference key="24">
    <citation type="journal article" date="2009" name="Science">
        <title>Lysine acetylation targets protein complexes and co-regulates major cellular functions.</title>
        <authorList>
            <person name="Choudhary C."/>
            <person name="Kumar C."/>
            <person name="Gnad F."/>
            <person name="Nielsen M.L."/>
            <person name="Rehman M."/>
            <person name="Walther T.C."/>
            <person name="Olsen J.V."/>
            <person name="Mann M."/>
        </authorList>
    </citation>
    <scope>ACETYLATION [LARGE SCALE ANALYSIS] AT LYS-22 AND LYS-95</scope>
    <scope>IDENTIFICATION BY MASS SPECTROMETRY [LARGE SCALE ANALYSIS]</scope>
</reference>
<reference key="25">
    <citation type="journal article" date="2010" name="J. Biol. Chem.">
        <title>Conserved motif of CDK5RAP2 mediates its localization to centrosomes and the Golgi complex.</title>
        <authorList>
            <person name="Wang Z."/>
            <person name="Wu T."/>
            <person name="Shi L."/>
            <person name="Zhang L."/>
            <person name="Zheng W."/>
            <person name="Qu J.Y."/>
            <person name="Niu R."/>
            <person name="Qi R.Z."/>
        </authorList>
    </citation>
    <scope>INTERACTION WITH CDK5RAP2</scope>
</reference>
<reference key="26">
    <citation type="journal article" date="2011" name="BMC Syst. Biol.">
        <title>Initial characterization of the human central proteome.</title>
        <authorList>
            <person name="Burkard T.R."/>
            <person name="Planyavsky M."/>
            <person name="Kaupe I."/>
            <person name="Breitwieser F.P."/>
            <person name="Buerckstuemmer T."/>
            <person name="Bennett K.L."/>
            <person name="Superti-Furga G."/>
            <person name="Colinge J."/>
        </authorList>
    </citation>
    <scope>IDENTIFICATION BY MASS SPECTROMETRY [LARGE SCALE ANALYSIS]</scope>
</reference>
<reference key="27">
    <citation type="journal article" date="2011" name="Sci. Signal.">
        <title>System-wide temporal characterization of the proteome and phosphoproteome of human embryonic stem cell differentiation.</title>
        <authorList>
            <person name="Rigbolt K.T."/>
            <person name="Prokhorova T.A."/>
            <person name="Akimov V."/>
            <person name="Henningsen J."/>
            <person name="Johansen P.T."/>
            <person name="Kratchmarova I."/>
            <person name="Kassem M."/>
            <person name="Mann M."/>
            <person name="Olsen J.V."/>
            <person name="Blagoev B."/>
        </authorList>
    </citation>
    <scope>PHOSPHORYLATION [LARGE SCALE ANALYSIS] AT SER-102</scope>
    <scope>IDENTIFICATION BY MASS SPECTROMETRY [LARGE SCALE ANALYSIS]</scope>
</reference>
<reference key="28">
    <citation type="journal article" date="2012" name="J. Biol. Chem.">
        <title>Crystal structure of calmodulin binding domain of orai1 in complex with Ca2+ calmodulin displays a unique binding mode.</title>
        <authorList>
            <person name="Liu Y."/>
            <person name="Zheng X."/>
            <person name="Mueller G.A."/>
            <person name="Sobhany M."/>
            <person name="DeRose E.F."/>
            <person name="Zhang Y."/>
            <person name="London R.E."/>
            <person name="Birnbaumer L."/>
        </authorList>
    </citation>
    <scope>INTERACTION WITH ORAI1</scope>
</reference>
<reference key="29">
    <citation type="journal article" date="2012" name="Mol. Cell. Proteomics">
        <title>Comparative large-scale characterisation of plant vs. mammal proteins reveals similar and idiosyncratic N-alpha acetylation features.</title>
        <authorList>
            <person name="Bienvenut W.V."/>
            <person name="Sumpton D."/>
            <person name="Martinez A."/>
            <person name="Lilla S."/>
            <person name="Espagne C."/>
            <person name="Meinnel T."/>
            <person name="Giglione C."/>
        </authorList>
    </citation>
    <scope>ACETYLATION [LARGE SCALE ANALYSIS] AT ALA-2</scope>
    <scope>CLEAVAGE OF INITIATOR METHIONINE [LARGE SCALE ANALYSIS]</scope>
    <scope>IDENTIFICATION BY MASS SPECTROMETRY [LARGE SCALE ANALYSIS]</scope>
</reference>
<reference key="30">
    <citation type="journal article" date="2012" name="Nat. Cell Biol.">
        <title>Distinct and separable activities of the endocytic clathrin-coat components Fcho1/2 and AP-2 in developmental patterning.</title>
        <authorList>
            <person name="Umasankar P.K."/>
            <person name="Sanker S."/>
            <person name="Thieman J.R."/>
            <person name="Chakraborty S."/>
            <person name="Wendland B."/>
            <person name="Tsang M."/>
            <person name="Traub L.M."/>
        </authorList>
    </citation>
    <scope>INTERACTION WITH FCHO1</scope>
</reference>
<reference key="31">
    <citation type="journal article" date="2012" name="Proc. Natl. Acad. Sci. U.S.A.">
        <title>N-terminal acetylome analyses and functional insights of the N-terminal acetyltransferase NatB.</title>
        <authorList>
            <person name="Van Damme P."/>
            <person name="Lasa M."/>
            <person name="Polevoda B."/>
            <person name="Gazquez C."/>
            <person name="Elosegui-Artola A."/>
            <person name="Kim D.S."/>
            <person name="De Juan-Pardo E."/>
            <person name="Demeyer K."/>
            <person name="Hole K."/>
            <person name="Larrea E."/>
            <person name="Timmerman E."/>
            <person name="Prieto J."/>
            <person name="Arnesen T."/>
            <person name="Sherman F."/>
            <person name="Gevaert K."/>
            <person name="Aldabe R."/>
        </authorList>
    </citation>
    <scope>ACETYLATION [LARGE SCALE ANALYSIS] AT ALA-2</scope>
    <scope>CLEAVAGE OF INITIATOR METHIONINE [LARGE SCALE ANALYSIS]</scope>
    <scope>IDENTIFICATION BY MASS SPECTROMETRY [LARGE SCALE ANALYSIS]</scope>
</reference>
<reference key="32">
    <citation type="journal article" date="2013" name="J. Proteome Res.">
        <title>Toward a comprehensive characterization of a human cancer cell phosphoproteome.</title>
        <authorList>
            <person name="Zhou H."/>
            <person name="Di Palma S."/>
            <person name="Preisinger C."/>
            <person name="Peng M."/>
            <person name="Polat A.N."/>
            <person name="Heck A.J."/>
            <person name="Mohammed S."/>
        </authorList>
    </citation>
    <scope>PHOSPHORYLATION [LARGE SCALE ANALYSIS] AT SER-82 AND SER-102</scope>
    <scope>IDENTIFICATION BY MASS SPECTROMETRY [LARGE SCALE ANALYSIS]</scope>
    <source>
        <tissue>Cervix carcinoma</tissue>
        <tissue>Erythroleukemia</tissue>
    </source>
</reference>
<reference key="33">
    <citation type="journal article" date="2014" name="J. Proteomics">
        <title>An enzyme assisted RP-RPLC approach for in-depth analysis of human liver phosphoproteome.</title>
        <authorList>
            <person name="Bian Y."/>
            <person name="Song C."/>
            <person name="Cheng K."/>
            <person name="Dong M."/>
            <person name="Wang F."/>
            <person name="Huang J."/>
            <person name="Sun D."/>
            <person name="Wang L."/>
            <person name="Ye M."/>
            <person name="Zou H."/>
        </authorList>
    </citation>
    <scope>PHOSPHORYLATION [LARGE SCALE ANALYSIS] AT SER-102 AND THR-111</scope>
    <scope>IDENTIFICATION BY MASS SPECTROMETRY [LARGE SCALE ANALYSIS]</scope>
    <source>
        <tissue>Liver</tissue>
    </source>
</reference>
<reference key="34">
    <citation type="journal article" date="2014" name="Mol. Cell. Proteomics">
        <title>Immunoaffinity enrichment and mass spectrometry analysis of protein methylation.</title>
        <authorList>
            <person name="Guo A."/>
            <person name="Gu H."/>
            <person name="Zhou J."/>
            <person name="Mulhern D."/>
            <person name="Wang Y."/>
            <person name="Lee K.A."/>
            <person name="Yang V."/>
            <person name="Aguiar M."/>
            <person name="Kornhauser J."/>
            <person name="Jia X."/>
            <person name="Ren J."/>
            <person name="Beausoleil S.A."/>
            <person name="Silva J.C."/>
            <person name="Vemulapalli V."/>
            <person name="Bedford M.T."/>
            <person name="Comb M.J."/>
        </authorList>
    </citation>
    <scope>METHYLATION [LARGE SCALE ANALYSIS] AT LYS-116</scope>
    <scope>IDENTIFICATION BY MASS SPECTROMETRY [LARGE SCALE ANALYSIS]</scope>
    <source>
        <tissue>Colon carcinoma</tissue>
    </source>
</reference>
<reference key="35">
    <citation type="journal article" date="2015" name="Mol. Cell. Proteomics">
        <title>KCMF1 (potassium channel modulatory factor 1) Links RAD6 to UBR4 (ubiquitin N-recognin domain-containing E3 ligase 4) and lysosome-mediated degradation.</title>
        <authorList>
            <person name="Hong J.H."/>
            <person name="Kaustov L."/>
            <person name="Coyaud E."/>
            <person name="Srikumar T."/>
            <person name="Wan J."/>
            <person name="Arrowsmith C."/>
            <person name="Raught B."/>
        </authorList>
    </citation>
    <scope>IDENTIFICATION IN THE SIFI COMPLEX</scope>
</reference>
<reference key="36">
    <citation type="journal article" date="2015" name="Proteomics">
        <title>N-terminome analysis of the human mitochondrial proteome.</title>
        <authorList>
            <person name="Vaca Jacome A.S."/>
            <person name="Rabilloud T."/>
            <person name="Schaeffer-Reiss C."/>
            <person name="Rompais M."/>
            <person name="Ayoub D."/>
            <person name="Lane L."/>
            <person name="Bairoch A."/>
            <person name="Van Dorsselaer A."/>
            <person name="Carapito C."/>
        </authorList>
    </citation>
    <scope>ACETYLATION [LARGE SCALE ANALYSIS] AT ALA-2</scope>
    <scope>CLEAVAGE OF INITIATOR METHIONINE [LARGE SCALE ANALYSIS]</scope>
    <scope>IDENTIFICATION BY MASS SPECTROMETRY [LARGE SCALE ANALYSIS]</scope>
</reference>
<reference key="37">
    <citation type="journal article" date="2016" name="Biochemistry">
        <title>Structural insights into the M-channel proximal C-terminus/calmodulin complex.</title>
        <authorList>
            <person name="Strulovich R."/>
            <person name="Tobelaim W.S."/>
            <person name="Attali B."/>
            <person name="Hirsch J.A."/>
        </authorList>
    </citation>
    <scope>INTERACTION WITH KCNQ2 AND KCNQ3</scope>
</reference>
<reference key="38">
    <citation type="journal article" date="2016" name="Nat. Commun.">
        <title>PEP-19 modulates calcium binding to calmodulin by electrostatic steering.</title>
        <authorList>
            <person name="Wang X."/>
            <person name="Putkey J.A."/>
        </authorList>
    </citation>
    <scope>INTERACTION WITH PCP4</scope>
    <scope>REGION</scope>
</reference>
<reference key="39">
    <citation type="journal article" date="2013" name="Circulation">
        <title>Calmodulin mutations associated with recurrent cardiac arrest in infants.</title>
        <authorList>
            <person name="Crotti L."/>
            <person name="Johnson C.N."/>
            <person name="Graf E."/>
            <person name="De Ferrari G.M."/>
            <person name="Cuneo B.F."/>
            <person name="Ovadia M."/>
            <person name="Papagiannis J."/>
            <person name="Feldkamp M.D."/>
            <person name="Rathi S.G."/>
            <person name="Kunic J.D."/>
            <person name="Pedrazzini M."/>
            <person name="Wieland T."/>
            <person name="Lichtner P."/>
            <person name="Beckmann B.M."/>
            <person name="Clark T."/>
            <person name="Shaffer C."/>
            <person name="Benson D.W."/>
            <person name="Kaab S."/>
            <person name="Meitinger T."/>
            <person name="Strom T.M."/>
            <person name="Chazin W.J."/>
            <person name="Schwartz P.J."/>
            <person name="George A.L. Jr."/>
        </authorList>
    </citation>
    <scope>INVOLVEMENT IN LQT15</scope>
    <scope>VARIANT LQT15 VAL-96</scope>
    <scope>CHARACTERIZATION OF VARIANT LQT15 VAL-96</scope>
</reference>
<reference key="40">
    <citation type="journal article" date="2014" name="Circ. Cardiovasc. Genet.">
        <title>Novel calmodulin mutations associated with congenital arrhythmia susceptibility.</title>
        <authorList>
            <person name="Makita N."/>
            <person name="Yagihara N."/>
            <person name="Crotti L."/>
            <person name="Johnson C.N."/>
            <person name="Beckmann B.M."/>
            <person name="Roh M.S."/>
            <person name="Shigemizu D."/>
            <person name="Lichtner P."/>
            <person name="Ishikawa T."/>
            <person name="Aiba T."/>
            <person name="Homfray T."/>
            <person name="Behr E.R."/>
            <person name="Klug D."/>
            <person name="Denjoy I."/>
            <person name="Mastantuono E."/>
            <person name="Theisen D."/>
            <person name="Tsunoda T."/>
            <person name="Satake W."/>
            <person name="Toda T."/>
            <person name="Nakagawa H."/>
            <person name="Tsuji Y."/>
            <person name="Tsuchiya T."/>
            <person name="Yamamoto H."/>
            <person name="Miyamoto Y."/>
            <person name="Endo N."/>
            <person name="Kimura A."/>
            <person name="Ozaki K."/>
            <person name="Motomura H."/>
            <person name="Suda K."/>
            <person name="Tanaka T."/>
            <person name="Schwartz P.J."/>
            <person name="Meitinger T."/>
            <person name="Kaeaeb S."/>
            <person name="Guicheney P."/>
            <person name="Shimizu W."/>
            <person name="Bhuiyan Z.A."/>
            <person name="Watanabe H."/>
            <person name="Chazin W.J."/>
            <person name="George A.L. Jr."/>
        </authorList>
    </citation>
    <scope>INVOLVEMENT IN LQT15</scope>
    <scope>VARIANTS LQT15 ILE-98; SER-98; GLU-132; HIS-134 AND PRO-136</scope>
    <scope>CHARACTERIZATION OF VARIANTS LQT15 ILE-98; GLU-132; HIS-134 AND PRO-136</scope>
</reference>
<reference key="41">
    <citation type="journal article" date="2017" name="Nat. Struct. Mol. Biol.">
        <title>Site-specific mapping of the human SUMO proteome reveals co-modification with phosphorylation.</title>
        <authorList>
            <person name="Hendriks I.A."/>
            <person name="Lyon D."/>
            <person name="Young C."/>
            <person name="Jensen L.J."/>
            <person name="Vertegaal A.C."/>
            <person name="Nielsen M.L."/>
        </authorList>
    </citation>
    <scope>SUMOYLATION [LARGE SCALE ANALYSIS] AT LYS-22</scope>
    <scope>IDENTIFICATION BY MASS SPECTROMETRY [LARGE SCALE ANALYSIS]</scope>
</reference>
<reference key="42">
    <citation type="journal article" date="2022" name="Cell">
        <title>A family of conserved bacterial virulence factors dampens interferon responses by blocking calcium signaling.</title>
        <authorList>
            <person name="Alphonse N."/>
            <person name="Wanford J.J."/>
            <person name="Voak A.A."/>
            <person name="Gay J."/>
            <person name="Venkhaya S."/>
            <person name="Burroughs O."/>
            <person name="Mathew S."/>
            <person name="Lee T."/>
            <person name="Evans S.L."/>
            <person name="Zhao W."/>
            <person name="Frowde K."/>
            <person name="Alrehaili A."/>
            <person name="Dickenson R.E."/>
            <person name="Munk M."/>
            <person name="Panina S."/>
            <person name="Mahmood I.F."/>
            <person name="Llorian M."/>
            <person name="Stanifer M.L."/>
            <person name="Boulant S."/>
            <person name="Berchtold M.W."/>
            <person name="Bergeron J.R.C."/>
            <person name="Wack A."/>
            <person name="Lesser C.F."/>
            <person name="Odendall C."/>
        </authorList>
    </citation>
    <scope>FUNCTION</scope>
    <scope>ACTIVITY REGULATION (MICROBIAL INFECTION)</scope>
    <scope>INTERACTION WITH S.FLEXNERI OSPC1 AND OSPC3 (MICROBIAL INFECTION)</scope>
</reference>
<reference key="43">
    <citation type="journal article" date="2022" name="Mol. Cell">
        <title>Pathogen hijacks programmed cell death signaling by arginine ADPR-deacylization of caspases.</title>
        <authorList>
            <person name="Peng T."/>
            <person name="Tao X."/>
            <person name="Xia Z."/>
            <person name="Hu S."/>
            <person name="Xue J."/>
            <person name="Zhu Q."/>
            <person name="Pan X."/>
            <person name="Zhang Q."/>
            <person name="Li S."/>
        </authorList>
    </citation>
    <scope>INTERACTION WITH C.VIOLACEUM COPC TOXIN (MICROBIAL INFECTION)</scope>
    <scope>FUNCTION (MICROBIAL INFECTION)</scope>
</reference>
<reference key="44">
    <citation type="journal article" date="2022" name="MBio">
        <title>Calmodulin binding activates chromobacterium CopC effector to ADP-riboxanate host apoptotic caspases.</title>
        <authorList>
            <person name="Liu Y."/>
            <person name="Zeng H."/>
            <person name="Hou Y."/>
            <person name="Li Z."/>
            <person name="Li L."/>
            <person name="Song X."/>
            <person name="Ding J."/>
            <person name="Shao F."/>
            <person name="Xu Y."/>
        </authorList>
    </citation>
    <scope>INTERACTION WITH C.VIOLACEUM COPC TOXIN (MICROBIAL INFECTION)</scope>
    <scope>FUNCTION (MICROBIAL INFECTION)</scope>
</reference>
<reference key="45">
    <citation type="journal article" date="2022" name="Mol. Cell">
        <title>Structural insights into caspase ADPR deacylization catalyzed by a bacterial effector and host calmodulin.</title>
        <authorList>
            <person name="Zhang K."/>
            <person name="Peng T."/>
            <person name="Tao X."/>
            <person name="Tian M."/>
            <person name="Li Y."/>
            <person name="Wang Z."/>
            <person name="Ma S."/>
            <person name="Hu S."/>
            <person name="Pan X."/>
            <person name="Xue J."/>
            <person name="Luo J."/>
            <person name="Wu Q."/>
            <person name="Fu Y."/>
            <person name="Li S."/>
        </authorList>
    </citation>
    <scope>INTERACTION WITH C.VIOLACEUM COPC TOXIN (MICROBIAL INFECTION)</scope>
    <scope>FUNCTION (MICROBIAL INFECTION)</scope>
</reference>
<reference key="46">
    <citation type="journal article" date="2023" name="Nat. Struct. Mol. Biol.">
        <title>Structural mechanisms of calmodulin activation of Shigella effector OspC3 to ADP-riboxanate caspase-4/11 and block pyroptosis.</title>
        <authorList>
            <person name="Hou Y."/>
            <person name="Zeng H."/>
            <person name="Li Z."/>
            <person name="Feng N."/>
            <person name="Meng F."/>
            <person name="Xu Y."/>
            <person name="Li L."/>
            <person name="Shao F."/>
            <person name="Ding J."/>
        </authorList>
    </citation>
    <scope>FUNCTION (MICROBIAL INFECTION)</scope>
    <scope>INTERACTION WITH S.FLEXNERI OSPC3 (MICROBIAL INFECTION)</scope>
</reference>
<reference key="47">
    <citation type="journal article" date="2024" name="Nature">
        <title>Stress response silencing by an E3 ligase mutated in neurodegeneration.</title>
        <authorList>
            <person name="Haakonsen D.L."/>
            <person name="Heider M."/>
            <person name="Ingersoll A.J."/>
            <person name="Vodehnal K."/>
            <person name="Witus S.R."/>
            <person name="Uenaka T."/>
            <person name="Wernig M."/>
            <person name="Rape M."/>
        </authorList>
    </citation>
    <scope>IDENTIFICATION IN THE SIFI COMPLEX</scope>
</reference>
<reference key="48">
    <citation type="journal article" date="2015" name="Biochim. Biophys. Acta">
        <title>Distinctive malfunctions of calmodulin mutations associated with heart RyR2-mediated arrhythmic disease.</title>
        <authorList>
            <person name="Vassilakopoulou V."/>
            <person name="Calver B.L."/>
            <person name="Thanassoulas A."/>
            <person name="Beck K."/>
            <person name="Hu H."/>
            <person name="Buntwal L."/>
            <person name="Smith A."/>
            <person name="Theodoridou M."/>
            <person name="Kashir J."/>
            <person name="Blayney L."/>
            <person name="Livaniou E."/>
            <person name="Nounesis G."/>
            <person name="Lai F.A."/>
            <person name="Nomikos M."/>
        </authorList>
    </citation>
    <scope>VARIANT LQT15 VAL-96</scope>
    <scope>CHARACTERIZATION OF VARIANT LQT15 VAL-96</scope>
    <scope>INTERACTION WITH RYR2</scope>
</reference>
<reference key="49">
    <citation type="journal article" date="2016" name="Circ. Arrhythm. Electrophysiol.">
        <title>Novel CPVT-Associated Calmodulin Mutation in CALM3 (CALM3-A103V) Activates Arrhythmogenic Ca Waves and Sparks.</title>
        <authorList>
            <person name="Gomez-Hurtado N."/>
            <person name="Boczek N.J."/>
            <person name="Kryshtal D.O."/>
            <person name="Johnson C.N."/>
            <person name="Sun J."/>
            <person name="Nitu F.R."/>
            <person name="Cornea R.L."/>
            <person name="Chazin W.J."/>
            <person name="Calvert M.L."/>
            <person name="Tester D.J."/>
            <person name="Ackerman M.J."/>
            <person name="Knollmann B.C."/>
        </authorList>
    </citation>
    <scope>VARIANT LQT15 VAL-96</scope>
    <scope>CHARACTERIZATION OF VARIANT LQT15 VAL-96</scope>
    <scope>INTERACTION WITH RYR2</scope>
</reference>
<reference key="50">
    <citation type="journal article" date="2016" name="Circ. Cardiovasc. Genet.">
        <title>Spectrum and Prevalence of CALM1-, CALM2-, and CALM3-Encoded Calmodulin Variants in Long QT Syndrome and Functional Characterization of a Novel Long QT Syndrome-Associated Calmodulin Missense Variant, E141G.</title>
        <authorList>
            <person name="Boczek N.J."/>
            <person name="Gomez-Hurtado N."/>
            <person name="Ye D."/>
            <person name="Calvert M.L."/>
            <person name="Tester D.J."/>
            <person name="Kryshtal D.O."/>
            <person name="Hwang H.S."/>
            <person name="Johnson C.N."/>
            <person name="Chazin W.J."/>
            <person name="Loporcaro C.G."/>
            <person name="Shah M."/>
            <person name="Papez A.L."/>
            <person name="Lau Y.R."/>
            <person name="Kanter R."/>
            <person name="Knollmann B.C."/>
            <person name="Ackerman M.J."/>
        </authorList>
    </citation>
    <scope>VARIANTS LQT15 GLY-130 AND VAL-130</scope>
    <scope>FUNCTION</scope>
</reference>
<reference key="51">
    <citation type="journal article" date="2016" name="Heart Rhythm">
        <title>Arrhythmogenic calmodulin mutations impede activation of small-conductance calcium-activated potassium current.</title>
        <authorList>
            <person name="Yu C.C."/>
            <person name="Ko J.S."/>
            <person name="Ai T."/>
            <person name="Tsai W.C."/>
            <person name="Chen Z."/>
            <person name="Rubart M."/>
            <person name="Vatta M."/>
            <person name="Everett T.H. IV"/>
            <person name="George A.L. Jr."/>
            <person name="Chen P.S."/>
        </authorList>
    </citation>
    <scope>VARIANT LQT15 VAL-96</scope>
    <scope>CHARACTERIZATION OF VARIANT LQT15 VAL-96</scope>
    <scope>FUNCTION</scope>
</reference>
<protein>
    <recommendedName>
        <fullName evidence="39">Calmodulin-2</fullName>
    </recommendedName>
</protein>
<keyword id="KW-0002">3D-structure</keyword>
<keyword id="KW-0007">Acetylation</keyword>
<keyword id="KW-0106">Calcium</keyword>
<keyword id="KW-0963">Cytoplasm</keyword>
<keyword id="KW-0206">Cytoskeleton</keyword>
<keyword id="KW-0903">Direct protein sequencing</keyword>
<keyword id="KW-0225">Disease variant</keyword>
<keyword id="KW-1017">Isopeptide bond</keyword>
<keyword id="KW-0454">Long QT syndrome</keyword>
<keyword id="KW-0479">Metal-binding</keyword>
<keyword id="KW-0488">Methylation</keyword>
<keyword id="KW-0597">Phosphoprotein</keyword>
<keyword id="KW-1185">Reference proteome</keyword>
<keyword id="KW-0677">Repeat</keyword>
<keyword id="KW-0832">Ubl conjugation</keyword>
<proteinExistence type="evidence at protein level"/>
<accession>P0DP24</accession>
<accession>P02593</accession>
<accession>P62158</accession>
<accession>P70667</accession>
<accession>P99014</accession>
<accession>Q13942</accession>
<accession>Q53S29</accession>
<accession>Q61379</accession>
<accession>Q61380</accession>
<accession>Q96HK3</accession>
<organism>
    <name type="scientific">Homo sapiens</name>
    <name type="common">Human</name>
    <dbReference type="NCBI Taxonomy" id="9606"/>
    <lineage>
        <taxon>Eukaryota</taxon>
        <taxon>Metazoa</taxon>
        <taxon>Chordata</taxon>
        <taxon>Craniata</taxon>
        <taxon>Vertebrata</taxon>
        <taxon>Euteleostomi</taxon>
        <taxon>Mammalia</taxon>
        <taxon>Eutheria</taxon>
        <taxon>Euarchontoglires</taxon>
        <taxon>Primates</taxon>
        <taxon>Haplorrhini</taxon>
        <taxon>Catarrhini</taxon>
        <taxon>Hominidae</taxon>
        <taxon>Homo</taxon>
    </lineage>
</organism>
<feature type="initiator methionine" description="Removed" evidence="34 36 41 45 46 50">
    <location>
        <position position="1"/>
    </location>
</feature>
<feature type="chain" id="PRO_0000439933" description="Calmodulin-2">
    <location>
        <begin position="2"/>
        <end position="149"/>
    </location>
</feature>
<feature type="domain" description="EF-hand 1" evidence="7">
    <location>
        <begin position="8"/>
        <end position="43"/>
    </location>
</feature>
<feature type="domain" description="EF-hand 2" evidence="7">
    <location>
        <begin position="44"/>
        <end position="79"/>
    </location>
</feature>
<feature type="domain" description="EF-hand 3" evidence="7">
    <location>
        <begin position="81"/>
        <end position="116"/>
    </location>
</feature>
<feature type="domain" description="EF-hand 4" evidence="7">
    <location>
        <begin position="117"/>
        <end position="149"/>
    </location>
</feature>
<feature type="region of interest" description="Necessary and sufficient for interaction with PCP4" evidence="27">
    <location>
        <begin position="77"/>
        <end position="149"/>
    </location>
</feature>
<feature type="binding site" evidence="7 10">
    <location>
        <position position="21"/>
    </location>
    <ligand>
        <name>Ca(2+)</name>
        <dbReference type="ChEBI" id="CHEBI:29108"/>
        <label>1</label>
    </ligand>
</feature>
<feature type="binding site" evidence="7 10">
    <location>
        <position position="23"/>
    </location>
    <ligand>
        <name>Ca(2+)</name>
        <dbReference type="ChEBI" id="CHEBI:29108"/>
        <label>1</label>
    </ligand>
</feature>
<feature type="binding site" evidence="7 10">
    <location>
        <position position="25"/>
    </location>
    <ligand>
        <name>Ca(2+)</name>
        <dbReference type="ChEBI" id="CHEBI:29108"/>
        <label>1</label>
    </ligand>
</feature>
<feature type="binding site" evidence="7 10">
    <location>
        <position position="27"/>
    </location>
    <ligand>
        <name>Ca(2+)</name>
        <dbReference type="ChEBI" id="CHEBI:29108"/>
        <label>1</label>
    </ligand>
</feature>
<feature type="binding site" evidence="7 10">
    <location>
        <position position="32"/>
    </location>
    <ligand>
        <name>Ca(2+)</name>
        <dbReference type="ChEBI" id="CHEBI:29108"/>
        <label>1</label>
    </ligand>
</feature>
<feature type="binding site" evidence="7 10">
    <location>
        <position position="57"/>
    </location>
    <ligand>
        <name>Ca(2+)</name>
        <dbReference type="ChEBI" id="CHEBI:29108"/>
        <label>2</label>
    </ligand>
</feature>
<feature type="binding site" evidence="7 10">
    <location>
        <position position="59"/>
    </location>
    <ligand>
        <name>Ca(2+)</name>
        <dbReference type="ChEBI" id="CHEBI:29108"/>
        <label>2</label>
    </ligand>
</feature>
<feature type="binding site" evidence="7 10">
    <location>
        <position position="61"/>
    </location>
    <ligand>
        <name>Ca(2+)</name>
        <dbReference type="ChEBI" id="CHEBI:29108"/>
        <label>2</label>
    </ligand>
</feature>
<feature type="binding site" evidence="7 10">
    <location>
        <position position="63"/>
    </location>
    <ligand>
        <name>Ca(2+)</name>
        <dbReference type="ChEBI" id="CHEBI:29108"/>
        <label>2</label>
    </ligand>
</feature>
<feature type="binding site" evidence="7 10">
    <location>
        <position position="68"/>
    </location>
    <ligand>
        <name>Ca(2+)</name>
        <dbReference type="ChEBI" id="CHEBI:29108"/>
        <label>2</label>
    </ligand>
</feature>
<feature type="binding site" evidence="7 10">
    <location>
        <position position="94"/>
    </location>
    <ligand>
        <name>Ca(2+)</name>
        <dbReference type="ChEBI" id="CHEBI:29108"/>
        <label>3</label>
    </ligand>
</feature>
<feature type="binding site" evidence="7 10">
    <location>
        <position position="96"/>
    </location>
    <ligand>
        <name>Ca(2+)</name>
        <dbReference type="ChEBI" id="CHEBI:29108"/>
        <label>3</label>
    </ligand>
</feature>
<feature type="binding site" evidence="7 10">
    <location>
        <position position="98"/>
    </location>
    <ligand>
        <name>Ca(2+)</name>
        <dbReference type="ChEBI" id="CHEBI:29108"/>
        <label>3</label>
    </ligand>
</feature>
<feature type="binding site" evidence="7 10">
    <location>
        <position position="100"/>
    </location>
    <ligand>
        <name>Ca(2+)</name>
        <dbReference type="ChEBI" id="CHEBI:29108"/>
        <label>3</label>
    </ligand>
</feature>
<feature type="binding site" evidence="7 10">
    <location>
        <position position="105"/>
    </location>
    <ligand>
        <name>Ca(2+)</name>
        <dbReference type="ChEBI" id="CHEBI:29108"/>
        <label>3</label>
    </ligand>
</feature>
<feature type="binding site" evidence="7 10">
    <location>
        <position position="130"/>
    </location>
    <ligand>
        <name>Ca(2+)</name>
        <dbReference type="ChEBI" id="CHEBI:29108"/>
        <label>4</label>
    </ligand>
</feature>
<feature type="binding site" evidence="7 10">
    <location>
        <position position="132"/>
    </location>
    <ligand>
        <name>Ca(2+)</name>
        <dbReference type="ChEBI" id="CHEBI:29108"/>
        <label>4</label>
    </ligand>
</feature>
<feature type="binding site" evidence="7 10">
    <location>
        <position position="134"/>
    </location>
    <ligand>
        <name>Ca(2+)</name>
        <dbReference type="ChEBI" id="CHEBI:29108"/>
        <label>4</label>
    </ligand>
</feature>
<feature type="binding site" evidence="7 10">
    <location>
        <position position="136"/>
    </location>
    <ligand>
        <name>Ca(2+)</name>
        <dbReference type="ChEBI" id="CHEBI:29108"/>
        <label>4</label>
    </ligand>
</feature>
<feature type="binding site" evidence="7 10">
    <location>
        <position position="141"/>
    </location>
    <ligand>
        <name>Ca(2+)</name>
        <dbReference type="ChEBI" id="CHEBI:29108"/>
        <label>4</label>
    </ligand>
</feature>
<feature type="modified residue" description="N-acetylalanine" evidence="34 36 41 45 46 50">
    <location>
        <position position="2"/>
    </location>
</feature>
<feature type="modified residue" description="N6-acetyllysine; alternate" evidence="42">
    <location>
        <position position="22"/>
    </location>
</feature>
<feature type="modified residue" description="Phosphothreonine; by CaMK4" evidence="3">
    <location>
        <position position="45"/>
    </location>
</feature>
<feature type="modified residue" description="Phosphoserine" evidence="47">
    <location>
        <position position="82"/>
    </location>
</feature>
<feature type="modified residue" description="N6-acetyllysine" evidence="42">
    <location>
        <position position="95"/>
    </location>
</feature>
<feature type="modified residue" description="Phosphotyrosine" evidence="40 43">
    <location>
        <position position="100"/>
    </location>
</feature>
<feature type="modified residue" description="Phosphoserine" evidence="44 47 49">
    <location>
        <position position="102"/>
    </location>
</feature>
<feature type="modified residue" description="Phosphothreonine" evidence="49">
    <location>
        <position position="111"/>
    </location>
</feature>
<feature type="modified residue" description="N6,N6,N6-trimethyllysine; alternate" evidence="34 48">
    <location>
        <position position="116"/>
    </location>
</feature>
<feature type="modified residue" description="N6-methyllysine; alternate" evidence="48">
    <location>
        <position position="116"/>
    </location>
</feature>
<feature type="modified residue" description="Phosphotyrosine" evidence="43">
    <location>
        <position position="139"/>
    </location>
</feature>
<feature type="cross-link" description="Glycyl lysine isopeptide (Lys-Gly) (interchain with G-Cter in SUMO2); alternate" evidence="51">
    <location>
        <position position="22"/>
    </location>
</feature>
<feature type="cross-link" description="Glycyl lysine isopeptide (Lys-Gly) (interchain with G-Cter in ubiquitin); alternate" evidence="4">
    <location>
        <position position="22"/>
    </location>
</feature>
<feature type="sequence variant" id="VAR_073276" description="In LQT15; reduction in calcium affinity; highly decreased calcium-dependent inactivation of L-type calcium channel; increased action potential duration; not changed protein abundance; not changed structure; increased thermal stability in absence of calcium; decreased thermal stability in presence of calcium; significantly increased RYR2 interaction; increased ryanodine-sensitive calcium-release channel activity; decreased of KCNN2 calcium-activated potassium channel activity; not changed KCNN2 expression; not changed KCNN2 location at membrane; dbSNP:rs730882254." evidence="19 22 24 25">
    <original>D</original>
    <variation>V</variation>
    <location>
        <position position="96"/>
    </location>
</feature>
<feature type="sequence variant" id="VAR_073277" description="In LQT15; reduction in calcium affinity; dbSNP:rs398124647." evidence="20">
    <original>N</original>
    <variation>I</variation>
    <location>
        <position position="98"/>
    </location>
</feature>
<feature type="sequence variant" id="VAR_078543" description="In LQT15; the mutant has significantly reduced calcium affinity compared to wild-type; calmodulin-RYR2 interaction is defective at low intracellular Ca(2+) concentrations and restored at moderate to high Ca(2+) concentrations; increased RYR2 calcium-release channel activity; decreased calcium-dependent inactivation of L-type calcium channel; not changed protein abundance; not changed structure; significantly reduced ryanodine-sensitive calcium-release channel activity; decreased of KCNN2 calcium-activated potassium channel activity; not changed KCNN2 expression; not changed KCNN2 location at membrane; dbSNP:rs398124647." evidence="20 22 24 25">
    <original>N</original>
    <variation>S</variation>
    <location>
        <position position="98"/>
    </location>
</feature>
<feature type="sequence variant" id="VAR_078544" description="In LQT15; reduction in calcium affinity; not changed protein abundance; not changed structure; significantly decreased thermal stability in presence of calcium; significantly decreased RYR2 interaction; increased ryanodine-sensitive calcium-release channel activity; decreased of KCNN2 calcium-activated potassium channel activity; not changed KCNN2 expression; not changed KCNN2 location at membrane; dbSNP:rs1573214163." evidence="19 22 23 24">
    <original>D</original>
    <variation>G</variation>
    <location>
        <position position="130"/>
    </location>
</feature>
<feature type="sequence variant" id="VAR_078262" description="In LQT15." evidence="23">
    <original>D</original>
    <variation>V</variation>
    <location>
        <position position="130"/>
    </location>
</feature>
<feature type="sequence variant" id="VAR_073279" description="In LQT15; reduction in calcium affinity; dbSNP:rs398124648." evidence="20">
    <original>D</original>
    <variation>E</variation>
    <location>
        <position position="132"/>
    </location>
</feature>
<feature type="sequence variant" id="VAR_073280" description="In LQT15; reduction in calcium affinity; dbSNP:rs398124650." evidence="20">
    <original>D</original>
    <variation>H</variation>
    <location>
        <position position="134"/>
    </location>
</feature>
<feature type="sequence variant" id="VAR_073281" description="In LQT15; reduction in calcium affinity; dbSNP:rs398124649." evidence="20">
    <original>Q</original>
    <variation>P</variation>
    <location>
        <position position="136"/>
    </location>
</feature>
<feature type="sequence conflict" description="In Ref. 7; AAH08437." evidence="38" ref="7">
    <original>E</original>
    <variation>Q</variation>
    <location>
        <position position="124"/>
    </location>
</feature>
<feature type="helix" evidence="53">
    <location>
        <begin position="7"/>
        <end position="20"/>
    </location>
</feature>
<feature type="strand" evidence="53">
    <location>
        <begin position="25"/>
        <end position="28"/>
    </location>
</feature>
<feature type="helix" evidence="53">
    <location>
        <begin position="30"/>
        <end position="39"/>
    </location>
</feature>
<feature type="helix" evidence="53">
    <location>
        <begin position="46"/>
        <end position="54"/>
    </location>
</feature>
<feature type="strand" evidence="52">
    <location>
        <begin position="57"/>
        <end position="60"/>
    </location>
</feature>
<feature type="strand" evidence="53">
    <location>
        <begin position="61"/>
        <end position="65"/>
    </location>
</feature>
<feature type="helix" evidence="53">
    <location>
        <begin position="66"/>
        <end position="93"/>
    </location>
</feature>
<feature type="strand" evidence="53">
    <location>
        <begin position="98"/>
        <end position="101"/>
    </location>
</feature>
<feature type="helix" evidence="53">
    <location>
        <begin position="103"/>
        <end position="112"/>
    </location>
</feature>
<feature type="strand" evidence="54">
    <location>
        <begin position="113"/>
        <end position="115"/>
    </location>
</feature>
<feature type="helix" evidence="53">
    <location>
        <begin position="119"/>
        <end position="129"/>
    </location>
</feature>
<feature type="strand" evidence="53">
    <location>
        <begin position="131"/>
        <end position="138"/>
    </location>
</feature>
<feature type="helix" evidence="53">
    <location>
        <begin position="139"/>
        <end position="145"/>
    </location>
</feature>
<evidence type="ECO:0000250" key="1"/>
<evidence type="ECO:0000250" key="2">
    <source>
        <dbReference type="UniProtKB" id="P0DP23"/>
    </source>
</evidence>
<evidence type="ECO:0000250" key="3">
    <source>
        <dbReference type="UniProtKB" id="P0DP30"/>
    </source>
</evidence>
<evidence type="ECO:0000250" key="4">
    <source>
        <dbReference type="UniProtKB" id="P62157"/>
    </source>
</evidence>
<evidence type="ECO:0000250" key="5">
    <source>
        <dbReference type="UniProtKB" id="P62161"/>
    </source>
</evidence>
<evidence type="ECO:0000250" key="6">
    <source>
        <dbReference type="UniProtKB" id="P62204"/>
    </source>
</evidence>
<evidence type="ECO:0000255" key="7">
    <source>
        <dbReference type="PROSITE-ProRule" id="PRU00448"/>
    </source>
</evidence>
<evidence type="ECO:0000269" key="8">
    <source>
    </source>
</evidence>
<evidence type="ECO:0000269" key="9">
    <source>
    </source>
</evidence>
<evidence type="ECO:0000269" key="10">
    <source>
    </source>
</evidence>
<evidence type="ECO:0000269" key="11">
    <source>
    </source>
</evidence>
<evidence type="ECO:0000269" key="12">
    <source>
    </source>
</evidence>
<evidence type="ECO:0000269" key="13">
    <source>
    </source>
</evidence>
<evidence type="ECO:0000269" key="14">
    <source>
    </source>
</evidence>
<evidence type="ECO:0000269" key="15">
    <source>
    </source>
</evidence>
<evidence type="ECO:0000269" key="16">
    <source>
    </source>
</evidence>
<evidence type="ECO:0000269" key="17">
    <source>
    </source>
</evidence>
<evidence type="ECO:0000269" key="18">
    <source>
    </source>
</evidence>
<evidence type="ECO:0000269" key="19">
    <source>
    </source>
</evidence>
<evidence type="ECO:0000269" key="20">
    <source>
    </source>
</evidence>
<evidence type="ECO:0000269" key="21">
    <source>
    </source>
</evidence>
<evidence type="ECO:0000269" key="22">
    <source>
    </source>
</evidence>
<evidence type="ECO:0000269" key="23">
    <source>
    </source>
</evidence>
<evidence type="ECO:0000269" key="24">
    <source>
    </source>
</evidence>
<evidence type="ECO:0000269" key="25">
    <source>
    </source>
</evidence>
<evidence type="ECO:0000269" key="26">
    <source>
    </source>
</evidence>
<evidence type="ECO:0000269" key="27">
    <source>
    </source>
</evidence>
<evidence type="ECO:0000269" key="28">
    <source>
    </source>
</evidence>
<evidence type="ECO:0000269" key="29">
    <source>
    </source>
</evidence>
<evidence type="ECO:0000269" key="30">
    <source>
    </source>
</evidence>
<evidence type="ECO:0000269" key="31">
    <source>
    </source>
</evidence>
<evidence type="ECO:0000269" key="32">
    <source>
    </source>
</evidence>
<evidence type="ECO:0000269" key="33">
    <source>
    </source>
</evidence>
<evidence type="ECO:0000269" key="34">
    <source>
    </source>
</evidence>
<evidence type="ECO:0000269" key="35">
    <source>
    </source>
</evidence>
<evidence type="ECO:0000269" key="36">
    <source ref="9"/>
</evidence>
<evidence type="ECO:0000303" key="37">
    <source>
    </source>
</evidence>
<evidence type="ECO:0000305" key="38"/>
<evidence type="ECO:0000312" key="39">
    <source>
        <dbReference type="HGNC" id="HGNC:1445"/>
    </source>
</evidence>
<evidence type="ECO:0007744" key="40">
    <source>
    </source>
</evidence>
<evidence type="ECO:0007744" key="41">
    <source>
    </source>
</evidence>
<evidence type="ECO:0007744" key="42">
    <source>
    </source>
</evidence>
<evidence type="ECO:0007744" key="43">
    <source>
    </source>
</evidence>
<evidence type="ECO:0007744" key="44">
    <source>
    </source>
</evidence>
<evidence type="ECO:0007744" key="45">
    <source>
    </source>
</evidence>
<evidence type="ECO:0007744" key="46">
    <source>
    </source>
</evidence>
<evidence type="ECO:0007744" key="47">
    <source>
    </source>
</evidence>
<evidence type="ECO:0007744" key="48">
    <source>
    </source>
</evidence>
<evidence type="ECO:0007744" key="49">
    <source>
    </source>
</evidence>
<evidence type="ECO:0007744" key="50">
    <source>
    </source>
</evidence>
<evidence type="ECO:0007744" key="51">
    <source>
    </source>
</evidence>
<evidence type="ECO:0007829" key="52">
    <source>
        <dbReference type="PDB" id="6PLM"/>
    </source>
</evidence>
<evidence type="ECO:0007829" key="53">
    <source>
        <dbReference type="PDB" id="6SZ5"/>
    </source>
</evidence>
<evidence type="ECO:0007829" key="54">
    <source>
        <dbReference type="PDB" id="7PPO"/>
    </source>
</evidence>